<name>PSB7_YEAST</name>
<evidence type="ECO:0000255" key="1">
    <source>
        <dbReference type="PROSITE-ProRule" id="PRU00809"/>
    </source>
</evidence>
<evidence type="ECO:0000269" key="2">
    <source>
    </source>
</evidence>
<evidence type="ECO:0000269" key="3">
    <source>
    </source>
</evidence>
<evidence type="ECO:0000269" key="4">
    <source>
    </source>
</evidence>
<evidence type="ECO:0000269" key="5">
    <source>
    </source>
</evidence>
<evidence type="ECO:0000269" key="6">
    <source>
    </source>
</evidence>
<evidence type="ECO:0000305" key="7"/>
<evidence type="ECO:0007829" key="8">
    <source>
        <dbReference type="PDB" id="1RYP"/>
    </source>
</evidence>
<evidence type="ECO:0007829" key="9">
    <source>
        <dbReference type="PDB" id="3GPJ"/>
    </source>
</evidence>
<evidence type="ECO:0007829" key="10">
    <source>
        <dbReference type="PDB" id="8RVQ"/>
    </source>
</evidence>
<evidence type="ECO:0007829" key="11">
    <source>
        <dbReference type="PDB" id="9GBK"/>
    </source>
</evidence>
<comment type="function">
    <text evidence="6">Non-catalytic component of the proteasome which degrades poly-ubiquitinated proteins in the cytoplasm and in the nucleus. It is essential for the regulated turnover of proteins and for the removal of misfolded proteins. The proteasome is a multicatalytic proteinase complex that is characterized by its ability to cleave peptides with Arg, Phe, Tyr, Leu, and Glu adjacent to the leaving group at neutral or slightly basic pH. It has an ATP-dependent proteolytic activity. PRE3 and PRE4 are necessary for the peptidyl-glutamyl-peptide-hydrolyzing activity.</text>
</comment>
<comment type="subunit">
    <text evidence="2 5 6">The 26S proteasome consists of a 20S proteasome core and two 19S regulatory subunits. The 20S proteasome core is composed of 28 subunits that are arranged in four stacked rings, resulting in a barrel-shaped structure. The two end rings are each formed by seven alpha subunits, and the two central rings are each formed by seven beta subunits. The catalytic chamber with the active sites is on the inside of the barrel. Interacts with CIC1.</text>
</comment>
<comment type="interaction">
    <interactant intactId="EBI-13997">
        <id>P30657</id>
    </interactant>
    <interactant intactId="EBI-13988">
        <id>P22141</id>
        <label>PRE1</label>
    </interactant>
    <organismsDiffer>false</organismsDiffer>
    <experiments>4</experiments>
</comment>
<comment type="interaction">
    <interactant intactId="EBI-13997">
        <id>P30657</id>
    </interactant>
    <interactant intactId="EBI-14001">
        <id>P30656</id>
        <label>PRE2</label>
    </interactant>
    <organismsDiffer>false</organismsDiffer>
    <experiments>3</experiments>
</comment>
<comment type="subcellular location">
    <subcellularLocation>
        <location evidence="1 3">Cytoplasm</location>
    </subcellularLocation>
    <subcellularLocation>
        <location evidence="3">Nucleus</location>
    </subcellularLocation>
</comment>
<comment type="miscellaneous">
    <text evidence="4">Present with 16900 molecules/cell in log phase SD medium.</text>
</comment>
<comment type="similarity">
    <text evidence="1">Belongs to the peptidase T1B family.</text>
</comment>
<comment type="caution">
    <text evidence="7">It is uncertain whether Met-1 or Met-31 is the initiator.</text>
</comment>
<organism>
    <name type="scientific">Saccharomyces cerevisiae (strain ATCC 204508 / S288c)</name>
    <name type="common">Baker's yeast</name>
    <dbReference type="NCBI Taxonomy" id="559292"/>
    <lineage>
        <taxon>Eukaryota</taxon>
        <taxon>Fungi</taxon>
        <taxon>Dikarya</taxon>
        <taxon>Ascomycota</taxon>
        <taxon>Saccharomycotina</taxon>
        <taxon>Saccharomycetes</taxon>
        <taxon>Saccharomycetales</taxon>
        <taxon>Saccharomycetaceae</taxon>
        <taxon>Saccharomyces</taxon>
    </lineage>
</organism>
<accession>P30657</accession>
<accession>D6VTT3</accession>
<accession>E9P8Z8</accession>
<reference key="1">
    <citation type="journal article" date="1993" name="J. Biol. Chem.">
        <title>The PRE4 gene codes for a subunit of the yeast proteasome necessary for peptidylglutamyl-peptide-hydrolyzing activity. Mutations link the proteasome to stress- and ubiquitin-dependent proteolysis.</title>
        <authorList>
            <person name="Hilt W."/>
            <person name="Enenkel C."/>
            <person name="Gruhler A."/>
            <person name="Singer T."/>
            <person name="Wolf D.H."/>
        </authorList>
    </citation>
    <scope>NUCLEOTIDE SEQUENCE [GENOMIC DNA]</scope>
    <scope>FUNCTION</scope>
    <scope>CATALYTIC ACTIVITY</scope>
    <scope>SUBUNIT</scope>
</reference>
<reference key="2">
    <citation type="journal article" date="1996" name="Yeast">
        <title>Analysis of a 36.2 kb DNA sequence including the right telomere of chromosome VI from Saccharomyces cerevisiae.</title>
        <authorList>
            <person name="Eki T."/>
            <person name="Naitou M."/>
            <person name="Hagiwara H."/>
            <person name="Ozawa M."/>
            <person name="Sasanuma S."/>
            <person name="Sasanuma M."/>
            <person name="Tsuchiya Y."/>
            <person name="Shibata T."/>
            <person name="Hanaoka F."/>
            <person name="Murakami Y."/>
        </authorList>
    </citation>
    <scope>NUCLEOTIDE SEQUENCE [GENOMIC DNA]</scope>
    <source>
        <strain>ATCC 204511 / S288c / AB972</strain>
    </source>
</reference>
<reference key="3">
    <citation type="journal article" date="1995" name="Nat. Genet.">
        <title>Analysis of the nucleotide sequence of chromosome VI from Saccharomyces cerevisiae.</title>
        <authorList>
            <person name="Murakami Y."/>
            <person name="Naitou M."/>
            <person name="Hagiwara H."/>
            <person name="Shibata T."/>
            <person name="Ozawa M."/>
            <person name="Sasanuma S."/>
            <person name="Sasanuma M."/>
            <person name="Tsuchiya Y."/>
            <person name="Soeda E."/>
            <person name="Yokoyama K."/>
            <person name="Yamazaki M."/>
            <person name="Tashiro H."/>
            <person name="Eki T."/>
        </authorList>
    </citation>
    <scope>NUCLEOTIDE SEQUENCE [LARGE SCALE GENOMIC DNA]</scope>
    <source>
        <strain>ATCC 204508 / S288c</strain>
    </source>
</reference>
<reference key="4">
    <citation type="journal article" date="2014" name="G3 (Bethesda)">
        <title>The reference genome sequence of Saccharomyces cerevisiae: Then and now.</title>
        <authorList>
            <person name="Engel S.R."/>
            <person name="Dietrich F.S."/>
            <person name="Fisk D.G."/>
            <person name="Binkley G."/>
            <person name="Balakrishnan R."/>
            <person name="Costanzo M.C."/>
            <person name="Dwight S.S."/>
            <person name="Hitz B.C."/>
            <person name="Karra K."/>
            <person name="Nash R.S."/>
            <person name="Weng S."/>
            <person name="Wong E.D."/>
            <person name="Lloyd P."/>
            <person name="Skrzypek M.S."/>
            <person name="Miyasato S.R."/>
            <person name="Simison M."/>
            <person name="Cherry J.M."/>
        </authorList>
    </citation>
    <scope>GENOME REANNOTATION</scope>
    <source>
        <strain>ATCC 204508 / S288c</strain>
    </source>
</reference>
<reference key="5">
    <citation type="journal article" date="2007" name="Genome Res.">
        <title>Approaching a complete repository of sequence-verified protein-encoding clones for Saccharomyces cerevisiae.</title>
        <authorList>
            <person name="Hu Y."/>
            <person name="Rolfs A."/>
            <person name="Bhullar B."/>
            <person name="Murthy T.V.S."/>
            <person name="Zhu C."/>
            <person name="Berger M.F."/>
            <person name="Camargo A.A."/>
            <person name="Kelley F."/>
            <person name="McCarron S."/>
            <person name="Jepson D."/>
            <person name="Richardson A."/>
            <person name="Raphael J."/>
            <person name="Moreira D."/>
            <person name="Taycher E."/>
            <person name="Zuo D."/>
            <person name="Mohr S."/>
            <person name="Kane M.F."/>
            <person name="Williamson J."/>
            <person name="Simpson A.J.G."/>
            <person name="Bulyk M.L."/>
            <person name="Harlow E."/>
            <person name="Marsischky G."/>
            <person name="Kolodner R.D."/>
            <person name="LaBaer J."/>
        </authorList>
    </citation>
    <scope>NUCLEOTIDE SEQUENCE [GENOMIC DNA]</scope>
    <source>
        <strain>ATCC 204508 / S288c</strain>
    </source>
</reference>
<reference key="6">
    <citation type="journal article" date="2001" name="EMBO J.">
        <title>Cic1, an adaptor protein specifically linking the 26S proteasome to its substrate, the SCF component Cdc4.</title>
        <authorList>
            <person name="Jaeger S."/>
            <person name="Strayle J."/>
            <person name="Heinemeyer W."/>
            <person name="Wolf D.H."/>
        </authorList>
    </citation>
    <scope>INTERACTION WITH CIC1</scope>
</reference>
<reference key="7">
    <citation type="journal article" date="2003" name="Nature">
        <title>Global analysis of protein localization in budding yeast.</title>
        <authorList>
            <person name="Huh W.-K."/>
            <person name="Falvo J.V."/>
            <person name="Gerke L.C."/>
            <person name="Carroll A.S."/>
            <person name="Howson R.W."/>
            <person name="Weissman J.S."/>
            <person name="O'Shea E.K."/>
        </authorList>
    </citation>
    <scope>SUBCELLULAR LOCATION [LARGE SCALE ANALYSIS]</scope>
</reference>
<reference key="8">
    <citation type="journal article" date="2003" name="Nature">
        <title>Global analysis of protein expression in yeast.</title>
        <authorList>
            <person name="Ghaemmaghami S."/>
            <person name="Huh W.-K."/>
            <person name="Bower K."/>
            <person name="Howson R.W."/>
            <person name="Belle A."/>
            <person name="Dephoure N."/>
            <person name="O'Shea E.K."/>
            <person name="Weissman J.S."/>
        </authorList>
    </citation>
    <scope>LEVEL OF PROTEIN EXPRESSION [LARGE SCALE ANALYSIS]</scope>
</reference>
<reference key="9">
    <citation type="journal article" date="1997" name="Nature">
        <title>Structure of 20S proteasome from yeast at 2.4-A resolution.</title>
        <authorList>
            <person name="Groll M."/>
            <person name="Ditzel L."/>
            <person name="Loewe J."/>
            <person name="Stock D."/>
            <person name="Bochtler M."/>
            <person name="Bartunik H.D."/>
            <person name="Huber R."/>
        </authorList>
    </citation>
    <scope>X-RAY CRYSTALLOGRAPHY (1.9 ANGSTROMS) OF 34-266 OF COMPLEX WITH THE 20S PROTEASOME</scope>
    <scope>PROTEOLYTIC PROCESSING</scope>
</reference>
<reference key="10">
    <citation type="journal article" date="2000" name="Nature">
        <title>Structural basis for the activation of 20S proteasomes by 11S regulators.</title>
        <authorList>
            <person name="Whitby F.G."/>
            <person name="Masters E.I."/>
            <person name="Kramer L."/>
            <person name="Knowlton J.R."/>
            <person name="Yao Y."/>
            <person name="Wang C.C."/>
            <person name="Hill C.P."/>
        </authorList>
    </citation>
    <scope>X-RAY CRYSTALLOGRAPHY (3.2 ANGSTROMS) OF 34-266 OF COMPLEX WITH THE 20S PROTEASOME AND A 11S REGULATORY COMPLEX</scope>
</reference>
<reference key="11">
    <citation type="journal article" date="2000" name="Nat. Struct. Biol.">
        <title>A gated channel into the proteasome core particle.</title>
        <authorList>
            <person name="Groll M."/>
            <person name="Bajorek M."/>
            <person name="Koehler A."/>
            <person name="Moroder L."/>
            <person name="Rubin D.M."/>
            <person name="Huber R."/>
            <person name="Glickman M.H."/>
            <person name="Finley D."/>
        </authorList>
    </citation>
    <scope>X-RAY CRYSTALLOGRAPHY (2.4 ANGSTROMS) OF COMPLEX WITH THE 20S PROTEASOME</scope>
</reference>
<reference key="12">
    <citation type="journal article" date="2006" name="Chem. Biol.">
        <title>TMC-95-based inhibitor design provides evidence for the catalytic versatility of the proteasome.</title>
        <authorList>
            <person name="Groll M."/>
            <person name="Goetz M."/>
            <person name="Kaiser M."/>
            <person name="Weyher E."/>
            <person name="Moroder L."/>
        </authorList>
    </citation>
    <scope>X-RAY CRYSTALLOGRAPHY (2.81 ANGSTROMS) OF 34-266 OF COMPLEX WITH THE 20S PROTEASOME AND A TMC-95-BASED INHIBITOR</scope>
</reference>
<reference key="13">
    <citation type="journal article" date="2006" name="J. Am. Chem. Soc.">
        <title>Crystal structures of salinosporamide A (NPI-0052) and B (NPI-0047) in complex with the 20S proteasome reveal important consequences of beta-lactone ring opening and a mechanism for irreversible binding.</title>
        <authorList>
            <person name="Groll M."/>
            <person name="Huber R."/>
            <person name="Potts B.C.M."/>
        </authorList>
    </citation>
    <scope>X-RAY CRYSTALLOGRAPHY (2.8 ANGSTROMS) OF 34-266 OF COMPLEX WITH THE 20S PROTEASOME AND SALINOSPORAMIDE</scope>
</reference>
<reference key="14">
    <citation type="journal article" date="2006" name="Structure">
        <title>Crystal structure of the boronic acid-based proteasome inhibitor bortezomib in complex with the yeast 20S proteasome.</title>
        <authorList>
            <person name="Groll M."/>
            <person name="Berkers C.R."/>
            <person name="Ploegh H.L."/>
            <person name="Ovaa H."/>
        </authorList>
    </citation>
    <scope>X-RAY CRYSTALLOGRAPHY (2.8 ANGSTROMS) OF 34-266 OF COMPLEX WITH THE 20S PROTEASOME AND BORTEZOMIB</scope>
</reference>
<reference key="15">
    <citation type="journal article" date="2010" name="Mol. Cell">
        <title>Structure of a Blm10 complex reveals common mechanisms for proteasome binding and gate opening.</title>
        <authorList>
            <person name="Sadre-Bazzaz K."/>
            <person name="Whitby F.G."/>
            <person name="Robinson H."/>
            <person name="Formosa T."/>
            <person name="Hill C.P."/>
        </authorList>
    </citation>
    <scope>X-RAY CRYSTALLOGRAPHY (3.0 ANGSTROMS) OF 34-266 IN COMPLEX WITH THE PROTEASOME</scope>
</reference>
<reference key="16">
    <citation type="journal article" date="2012" name="Proc. Natl. Acad. Sci. U.S.A.">
        <title>Near-atomic resolution structural model of the yeast 26S proteasome.</title>
        <authorList>
            <person name="Beck F."/>
            <person name="Unverdorben P."/>
            <person name="Bohn S."/>
            <person name="Schweitzer A."/>
            <person name="Pfeifer G."/>
            <person name="Sakata E."/>
            <person name="Nickell S."/>
            <person name="Plitzko J.M."/>
            <person name="Villa E."/>
            <person name="Baumeister W."/>
            <person name="Forster F."/>
        </authorList>
    </citation>
    <scope>STRUCTURE BY ELECTRON MICROSCOPY (7.4 ANGSTROMS) OF THE 26S PROTEASOME</scope>
</reference>
<feature type="propeptide" id="PRO_0000331490">
    <location>
        <begin position="1"/>
        <end position="33"/>
    </location>
</feature>
<feature type="chain" id="PRO_0000148073" description="Proteasome subunit beta type-7">
    <location>
        <begin position="34"/>
        <end position="266"/>
    </location>
</feature>
<feature type="sequence conflict" description="In Ref. 5; AAT92966." evidence="7" ref="5">
    <original>L</original>
    <variation>V</variation>
    <location>
        <position position="188"/>
    </location>
</feature>
<feature type="strand" evidence="8">
    <location>
        <begin position="39"/>
        <end position="41"/>
    </location>
</feature>
<feature type="strand" evidence="8">
    <location>
        <begin position="44"/>
        <end position="49"/>
    </location>
</feature>
<feature type="strand" evidence="8">
    <location>
        <begin position="52"/>
        <end position="58"/>
    </location>
</feature>
<feature type="strand" evidence="8">
    <location>
        <begin position="61"/>
        <end position="63"/>
    </location>
</feature>
<feature type="strand" evidence="8">
    <location>
        <begin position="66"/>
        <end position="70"/>
    </location>
</feature>
<feature type="strand" evidence="8">
    <location>
        <begin position="75"/>
        <end position="78"/>
    </location>
</feature>
<feature type="turn" evidence="8">
    <location>
        <begin position="79"/>
        <end position="81"/>
    </location>
</feature>
<feature type="strand" evidence="8">
    <location>
        <begin position="82"/>
        <end position="89"/>
    </location>
</feature>
<feature type="helix" evidence="8">
    <location>
        <begin position="90"/>
        <end position="108"/>
    </location>
</feature>
<feature type="turn" evidence="8">
    <location>
        <begin position="112"/>
        <end position="118"/>
    </location>
</feature>
<feature type="helix" evidence="8">
    <location>
        <begin position="122"/>
        <end position="138"/>
    </location>
</feature>
<feature type="strand" evidence="8">
    <location>
        <begin position="145"/>
        <end position="152"/>
    </location>
</feature>
<feature type="strand" evidence="8">
    <location>
        <begin position="158"/>
        <end position="164"/>
    </location>
</feature>
<feature type="helix" evidence="11">
    <location>
        <begin position="165"/>
        <end position="167"/>
    </location>
</feature>
<feature type="strand" evidence="10">
    <location>
        <begin position="169"/>
        <end position="171"/>
    </location>
</feature>
<feature type="strand" evidence="8">
    <location>
        <begin position="173"/>
        <end position="176"/>
    </location>
</feature>
<feature type="helix" evidence="8">
    <location>
        <begin position="179"/>
        <end position="188"/>
    </location>
</feature>
<feature type="turn" evidence="8">
    <location>
        <begin position="189"/>
        <end position="191"/>
    </location>
</feature>
<feature type="strand" evidence="9">
    <location>
        <begin position="192"/>
        <end position="194"/>
    </location>
</feature>
<feature type="helix" evidence="8">
    <location>
        <begin position="195"/>
        <end position="200"/>
    </location>
</feature>
<feature type="helix" evidence="8">
    <location>
        <begin position="203"/>
        <end position="220"/>
    </location>
</feature>
<feature type="strand" evidence="8">
    <location>
        <begin position="226"/>
        <end position="234"/>
    </location>
</feature>
<feature type="turn" evidence="8">
    <location>
        <begin position="235"/>
        <end position="237"/>
    </location>
</feature>
<feature type="strand" evidence="8">
    <location>
        <begin position="238"/>
        <end position="246"/>
    </location>
</feature>
<feature type="helix" evidence="8">
    <location>
        <begin position="253"/>
        <end position="257"/>
    </location>
</feature>
<feature type="strand" evidence="8">
    <location>
        <begin position="260"/>
        <end position="263"/>
    </location>
</feature>
<keyword id="KW-0002">3D-structure</keyword>
<keyword id="KW-0963">Cytoplasm</keyword>
<keyword id="KW-0539">Nucleus</keyword>
<keyword id="KW-0647">Proteasome</keyword>
<keyword id="KW-1185">Reference proteome</keyword>
<dbReference type="EMBL" id="X68663">
    <property type="protein sequence ID" value="CAA48629.1"/>
    <property type="molecule type" value="Genomic_DNA"/>
</dbReference>
<dbReference type="EMBL" id="D50617">
    <property type="protein sequence ID" value="BAA09289.1"/>
    <property type="molecule type" value="Genomic_DNA"/>
</dbReference>
<dbReference type="EMBL" id="AY692947">
    <property type="protein sequence ID" value="AAT92966.1"/>
    <property type="molecule type" value="Genomic_DNA"/>
</dbReference>
<dbReference type="EMBL" id="BK006940">
    <property type="protein sequence ID" value="DAA12493.1"/>
    <property type="molecule type" value="Genomic_DNA"/>
</dbReference>
<dbReference type="PIR" id="A46610">
    <property type="entry name" value="A46610"/>
</dbReference>
<dbReference type="RefSeq" id="NP_116708.1">
    <property type="nucleotide sequence ID" value="NM_001180015.1"/>
</dbReference>
<dbReference type="PDB" id="1FNT">
    <property type="method" value="X-ray"/>
    <property type="resolution" value="3.20 A"/>
    <property type="chains" value="N/b=34-265"/>
</dbReference>
<dbReference type="PDB" id="1G0U">
    <property type="method" value="X-ray"/>
    <property type="resolution" value="2.40 A"/>
    <property type="chains" value="1/M=1-266"/>
</dbReference>
<dbReference type="PDB" id="1G65">
    <property type="method" value="X-ray"/>
    <property type="resolution" value="2.25 A"/>
    <property type="chains" value="1/M=34-266"/>
</dbReference>
<dbReference type="PDB" id="1JD2">
    <property type="method" value="X-ray"/>
    <property type="resolution" value="3.00 A"/>
    <property type="chains" value="M/T=34-266"/>
</dbReference>
<dbReference type="PDB" id="1RYP">
    <property type="method" value="X-ray"/>
    <property type="resolution" value="1.90 A"/>
    <property type="chains" value="2/N=34-266"/>
</dbReference>
<dbReference type="PDB" id="1Z7Q">
    <property type="method" value="X-ray"/>
    <property type="resolution" value="3.22 A"/>
    <property type="chains" value="N/b=34-266"/>
</dbReference>
<dbReference type="PDB" id="2F16">
    <property type="method" value="X-ray"/>
    <property type="resolution" value="2.80 A"/>
    <property type="chains" value="1/M=34-266"/>
</dbReference>
<dbReference type="PDB" id="2FAK">
    <property type="method" value="X-ray"/>
    <property type="resolution" value="2.80 A"/>
    <property type="chains" value="1/M=34-266"/>
</dbReference>
<dbReference type="PDB" id="2GPL">
    <property type="method" value="X-ray"/>
    <property type="resolution" value="2.81 A"/>
    <property type="chains" value="1/M=34-266"/>
</dbReference>
<dbReference type="PDB" id="2ZCY">
    <property type="method" value="X-ray"/>
    <property type="resolution" value="2.90 A"/>
    <property type="chains" value="0/M=1-266"/>
</dbReference>
<dbReference type="PDB" id="3BDM">
    <property type="method" value="X-ray"/>
    <property type="resolution" value="2.70 A"/>
    <property type="chains" value="0/M=1-266"/>
</dbReference>
<dbReference type="PDB" id="3D29">
    <property type="method" value="X-ray"/>
    <property type="resolution" value="2.60 A"/>
    <property type="chains" value="1/M=34-266"/>
</dbReference>
<dbReference type="PDB" id="3DY3">
    <property type="method" value="X-ray"/>
    <property type="resolution" value="2.81 A"/>
    <property type="chains" value="1/M=34-266"/>
</dbReference>
<dbReference type="PDB" id="3DY4">
    <property type="method" value="X-ray"/>
    <property type="resolution" value="2.80 A"/>
    <property type="chains" value="1/M=34-266"/>
</dbReference>
<dbReference type="PDB" id="3E47">
    <property type="method" value="X-ray"/>
    <property type="resolution" value="3.00 A"/>
    <property type="chains" value="1/M=34-266"/>
</dbReference>
<dbReference type="PDB" id="3GPJ">
    <property type="method" value="X-ray"/>
    <property type="resolution" value="2.70 A"/>
    <property type="chains" value="1/M=34-266"/>
</dbReference>
<dbReference type="PDB" id="3GPT">
    <property type="method" value="X-ray"/>
    <property type="resolution" value="2.41 A"/>
    <property type="chains" value="1/M=34-266"/>
</dbReference>
<dbReference type="PDB" id="3GPW">
    <property type="method" value="X-ray"/>
    <property type="resolution" value="2.50 A"/>
    <property type="chains" value="1/M=34-266"/>
</dbReference>
<dbReference type="PDB" id="3HYE">
    <property type="method" value="X-ray"/>
    <property type="resolution" value="2.50 A"/>
    <property type="chains" value="1/M=34-266"/>
</dbReference>
<dbReference type="PDB" id="3JCO">
    <property type="method" value="EM"/>
    <property type="resolution" value="4.80 A"/>
    <property type="chains" value="2/9=1-266"/>
</dbReference>
<dbReference type="PDB" id="3JCP">
    <property type="method" value="EM"/>
    <property type="resolution" value="4.60 A"/>
    <property type="chains" value="2/9=1-266"/>
</dbReference>
<dbReference type="PDB" id="3MG0">
    <property type="method" value="X-ray"/>
    <property type="resolution" value="2.68 A"/>
    <property type="chains" value="1/M=34-266"/>
</dbReference>
<dbReference type="PDB" id="3MG4">
    <property type="method" value="X-ray"/>
    <property type="resolution" value="3.11 A"/>
    <property type="chains" value="1/M=34-266"/>
</dbReference>
<dbReference type="PDB" id="3MG6">
    <property type="method" value="X-ray"/>
    <property type="resolution" value="2.60 A"/>
    <property type="chains" value="1/M=1-266"/>
</dbReference>
<dbReference type="PDB" id="3MG7">
    <property type="method" value="X-ray"/>
    <property type="resolution" value="2.78 A"/>
    <property type="chains" value="1/M=1-266"/>
</dbReference>
<dbReference type="PDB" id="3MG8">
    <property type="method" value="X-ray"/>
    <property type="resolution" value="2.59 A"/>
    <property type="chains" value="1/M=1-266"/>
</dbReference>
<dbReference type="PDB" id="3NZJ">
    <property type="method" value="X-ray"/>
    <property type="resolution" value="2.40 A"/>
    <property type="chains" value="1/M=1-266"/>
</dbReference>
<dbReference type="PDB" id="3NZW">
    <property type="method" value="X-ray"/>
    <property type="resolution" value="2.50 A"/>
    <property type="chains" value="1/M=1-266"/>
</dbReference>
<dbReference type="PDB" id="3NZX">
    <property type="method" value="X-ray"/>
    <property type="resolution" value="2.70 A"/>
    <property type="chains" value="1/M=1-266"/>
</dbReference>
<dbReference type="PDB" id="3OEU">
    <property type="method" value="X-ray"/>
    <property type="resolution" value="2.60 A"/>
    <property type="chains" value="1/M=34-266"/>
</dbReference>
<dbReference type="PDB" id="3OEV">
    <property type="method" value="X-ray"/>
    <property type="resolution" value="2.85 A"/>
    <property type="chains" value="1/M=34-266"/>
</dbReference>
<dbReference type="PDB" id="3OKJ">
    <property type="method" value="X-ray"/>
    <property type="resolution" value="2.70 A"/>
    <property type="chains" value="1/M=34-266"/>
</dbReference>
<dbReference type="PDB" id="3SDI">
    <property type="method" value="X-ray"/>
    <property type="resolution" value="2.65 A"/>
    <property type="chains" value="1/M=34-253"/>
</dbReference>
<dbReference type="PDB" id="3SDK">
    <property type="method" value="X-ray"/>
    <property type="resolution" value="2.70 A"/>
    <property type="chains" value="1/M=34-266"/>
</dbReference>
<dbReference type="PDB" id="3SHJ">
    <property type="method" value="X-ray"/>
    <property type="resolution" value="2.80 A"/>
    <property type="chains" value="1/M=34-266"/>
</dbReference>
<dbReference type="PDB" id="3TDD">
    <property type="method" value="X-ray"/>
    <property type="resolution" value="2.70 A"/>
    <property type="chains" value="1/M=34-266"/>
</dbReference>
<dbReference type="PDB" id="3UN4">
    <property type="method" value="X-ray"/>
    <property type="resolution" value="3.40 A"/>
    <property type="chains" value="M/a=34-266"/>
</dbReference>
<dbReference type="PDB" id="3UN8">
    <property type="method" value="X-ray"/>
    <property type="resolution" value="2.70 A"/>
    <property type="chains" value="M/a=34-266"/>
</dbReference>
<dbReference type="PDB" id="3WXR">
    <property type="method" value="X-ray"/>
    <property type="resolution" value="3.15 A"/>
    <property type="chains" value="2/N=1-266"/>
</dbReference>
<dbReference type="PDB" id="4CR2">
    <property type="method" value="EM"/>
    <property type="resolution" value="7.70 A"/>
    <property type="chains" value="7=1-266"/>
</dbReference>
<dbReference type="PDB" id="4CR3">
    <property type="method" value="EM"/>
    <property type="resolution" value="9.30 A"/>
    <property type="chains" value="7=1-266"/>
</dbReference>
<dbReference type="PDB" id="4CR4">
    <property type="method" value="EM"/>
    <property type="resolution" value="8.80 A"/>
    <property type="chains" value="7=1-266"/>
</dbReference>
<dbReference type="PDB" id="4EU2">
    <property type="method" value="X-ray"/>
    <property type="resolution" value="2.51 A"/>
    <property type="chains" value="2/N=34-266"/>
</dbReference>
<dbReference type="PDB" id="4FZC">
    <property type="method" value="X-ray"/>
    <property type="resolution" value="2.80 A"/>
    <property type="chains" value="M/a=34-266"/>
</dbReference>
<dbReference type="PDB" id="4FZG">
    <property type="method" value="X-ray"/>
    <property type="resolution" value="3.00 A"/>
    <property type="chains" value="M/a=34-266"/>
</dbReference>
<dbReference type="PDB" id="4G4S">
    <property type="method" value="X-ray"/>
    <property type="resolution" value="2.49 A"/>
    <property type="chains" value="N=34-266"/>
</dbReference>
<dbReference type="PDB" id="4GK7">
    <property type="method" value="X-ray"/>
    <property type="resolution" value="2.80 A"/>
    <property type="chains" value="M/a=34-266"/>
</dbReference>
<dbReference type="PDB" id="4HNP">
    <property type="method" value="X-ray"/>
    <property type="resolution" value="2.80 A"/>
    <property type="chains" value="M/a=34-266"/>
</dbReference>
<dbReference type="PDB" id="4HRC">
    <property type="method" value="X-ray"/>
    <property type="resolution" value="2.80 A"/>
    <property type="chains" value="M/a=34-266"/>
</dbReference>
<dbReference type="PDB" id="4HRD">
    <property type="method" value="X-ray"/>
    <property type="resolution" value="2.80 A"/>
    <property type="chains" value="M/a=34-266"/>
</dbReference>
<dbReference type="PDB" id="4INR">
    <property type="method" value="X-ray"/>
    <property type="resolution" value="2.70 A"/>
    <property type="chains" value="M/a=34-266"/>
</dbReference>
<dbReference type="PDB" id="4INT">
    <property type="method" value="X-ray"/>
    <property type="resolution" value="2.90 A"/>
    <property type="chains" value="M/a=34-266"/>
</dbReference>
<dbReference type="PDB" id="4INU">
    <property type="method" value="X-ray"/>
    <property type="resolution" value="3.10 A"/>
    <property type="chains" value="M/a=34-266"/>
</dbReference>
<dbReference type="PDB" id="4J70">
    <property type="method" value="X-ray"/>
    <property type="resolution" value="2.80 A"/>
    <property type="chains" value="M/a=34-266"/>
</dbReference>
<dbReference type="PDB" id="4JSQ">
    <property type="method" value="X-ray"/>
    <property type="resolution" value="2.80 A"/>
    <property type="chains" value="M/a=34-266"/>
</dbReference>
<dbReference type="PDB" id="4JSU">
    <property type="method" value="X-ray"/>
    <property type="resolution" value="2.90 A"/>
    <property type="chains" value="M/a=34-266"/>
</dbReference>
<dbReference type="PDB" id="4JT0">
    <property type="method" value="X-ray"/>
    <property type="resolution" value="3.10 A"/>
    <property type="chains" value="M/a=34-266"/>
</dbReference>
<dbReference type="PDB" id="4LQI">
    <property type="method" value="X-ray"/>
    <property type="resolution" value="2.70 A"/>
    <property type="chains" value="M/a=34-266"/>
</dbReference>
<dbReference type="PDB" id="4LTC">
    <property type="method" value="X-ray"/>
    <property type="resolution" value="2.50 A"/>
    <property type="chains" value="M/a=34-266"/>
</dbReference>
<dbReference type="PDB" id="4NNN">
    <property type="method" value="X-ray"/>
    <property type="resolution" value="2.50 A"/>
    <property type="chains" value="M/a=21-266"/>
</dbReference>
<dbReference type="PDB" id="4NNW">
    <property type="method" value="X-ray"/>
    <property type="resolution" value="2.60 A"/>
    <property type="chains" value="M/a=21-266"/>
</dbReference>
<dbReference type="PDB" id="4NO1">
    <property type="method" value="X-ray"/>
    <property type="resolution" value="2.50 A"/>
    <property type="chains" value="M/a=21-266"/>
</dbReference>
<dbReference type="PDB" id="4NO6">
    <property type="method" value="X-ray"/>
    <property type="resolution" value="3.00 A"/>
    <property type="chains" value="M/a=21-266"/>
</dbReference>
<dbReference type="PDB" id="4NO8">
    <property type="method" value="X-ray"/>
    <property type="resolution" value="2.70 A"/>
    <property type="chains" value="M/a=21-266"/>
</dbReference>
<dbReference type="PDB" id="4NO9">
    <property type="method" value="X-ray"/>
    <property type="resolution" value="2.90 A"/>
    <property type="chains" value="M/a=21-266"/>
</dbReference>
<dbReference type="PDB" id="4Q1S">
    <property type="method" value="X-ray"/>
    <property type="resolution" value="2.60 A"/>
    <property type="chains" value="M/a=21-266"/>
</dbReference>
<dbReference type="PDB" id="4QBY">
    <property type="method" value="X-ray"/>
    <property type="resolution" value="3.00 A"/>
    <property type="chains" value="M/a=21-266"/>
</dbReference>
<dbReference type="PDB" id="4QLQ">
    <property type="method" value="X-ray"/>
    <property type="resolution" value="2.40 A"/>
    <property type="chains" value="M/a=21-266"/>
</dbReference>
<dbReference type="PDB" id="4QLS">
    <property type="method" value="X-ray"/>
    <property type="resolution" value="2.80 A"/>
    <property type="chains" value="M/a=21-266"/>
</dbReference>
<dbReference type="PDB" id="4QLT">
    <property type="method" value="X-ray"/>
    <property type="resolution" value="2.80 A"/>
    <property type="chains" value="M/a=21-266"/>
</dbReference>
<dbReference type="PDB" id="4QLU">
    <property type="method" value="X-ray"/>
    <property type="resolution" value="2.80 A"/>
    <property type="chains" value="M/a=21-266"/>
</dbReference>
<dbReference type="PDB" id="4QLV">
    <property type="method" value="X-ray"/>
    <property type="resolution" value="2.90 A"/>
    <property type="chains" value="M/a=21-266"/>
</dbReference>
<dbReference type="PDB" id="4QUX">
    <property type="method" value="X-ray"/>
    <property type="resolution" value="3.00 A"/>
    <property type="chains" value="M/a=21-266"/>
</dbReference>
<dbReference type="PDB" id="4QUY">
    <property type="method" value="X-ray"/>
    <property type="resolution" value="2.80 A"/>
    <property type="chains" value="M/a=21-266"/>
</dbReference>
<dbReference type="PDB" id="4QV0">
    <property type="method" value="X-ray"/>
    <property type="resolution" value="3.10 A"/>
    <property type="chains" value="M/a=21-266"/>
</dbReference>
<dbReference type="PDB" id="4QV1">
    <property type="method" value="X-ray"/>
    <property type="resolution" value="2.50 A"/>
    <property type="chains" value="M/a=21-266"/>
</dbReference>
<dbReference type="PDB" id="4QV3">
    <property type="method" value="X-ray"/>
    <property type="resolution" value="3.00 A"/>
    <property type="chains" value="M/a=21-266"/>
</dbReference>
<dbReference type="PDB" id="4QV4">
    <property type="method" value="X-ray"/>
    <property type="resolution" value="2.70 A"/>
    <property type="chains" value="M/a=21-266"/>
</dbReference>
<dbReference type="PDB" id="4QV5">
    <property type="method" value="X-ray"/>
    <property type="resolution" value="2.70 A"/>
    <property type="chains" value="M/a=21-266"/>
</dbReference>
<dbReference type="PDB" id="4QV6">
    <property type="method" value="X-ray"/>
    <property type="resolution" value="2.80 A"/>
    <property type="chains" value="M/a=21-266"/>
</dbReference>
<dbReference type="PDB" id="4QV7">
    <property type="method" value="X-ray"/>
    <property type="resolution" value="2.60 A"/>
    <property type="chains" value="M/a=21-266"/>
</dbReference>
<dbReference type="PDB" id="4QV8">
    <property type="method" value="X-ray"/>
    <property type="resolution" value="2.90 A"/>
    <property type="chains" value="M/a=21-266"/>
</dbReference>
<dbReference type="PDB" id="4QV9">
    <property type="method" value="X-ray"/>
    <property type="resolution" value="2.60 A"/>
    <property type="chains" value="M/a=21-266"/>
</dbReference>
<dbReference type="PDB" id="4QVL">
    <property type="method" value="X-ray"/>
    <property type="resolution" value="2.80 A"/>
    <property type="chains" value="M/a=21-266"/>
</dbReference>
<dbReference type="PDB" id="4QVM">
    <property type="method" value="X-ray"/>
    <property type="resolution" value="2.80 A"/>
    <property type="chains" value="M/a=21-266"/>
</dbReference>
<dbReference type="PDB" id="4QVN">
    <property type="method" value="X-ray"/>
    <property type="resolution" value="2.90 A"/>
    <property type="chains" value="M/a=21-266"/>
</dbReference>
<dbReference type="PDB" id="4QVP">
    <property type="method" value="X-ray"/>
    <property type="resolution" value="2.30 A"/>
    <property type="chains" value="M/a=21-266"/>
</dbReference>
<dbReference type="PDB" id="4QVQ">
    <property type="method" value="X-ray"/>
    <property type="resolution" value="2.60 A"/>
    <property type="chains" value="M/a=21-266"/>
</dbReference>
<dbReference type="PDB" id="4QVV">
    <property type="method" value="X-ray"/>
    <property type="resolution" value="2.80 A"/>
    <property type="chains" value="M/a=21-266"/>
</dbReference>
<dbReference type="PDB" id="4QVW">
    <property type="method" value="X-ray"/>
    <property type="resolution" value="3.00 A"/>
    <property type="chains" value="M/a=21-266"/>
</dbReference>
<dbReference type="PDB" id="4QVY">
    <property type="method" value="X-ray"/>
    <property type="resolution" value="2.51 A"/>
    <property type="chains" value="M/a=21-266"/>
</dbReference>
<dbReference type="PDB" id="4QW0">
    <property type="method" value="X-ray"/>
    <property type="resolution" value="2.90 A"/>
    <property type="chains" value="M/a=21-266"/>
</dbReference>
<dbReference type="PDB" id="4QW1">
    <property type="method" value="X-ray"/>
    <property type="resolution" value="2.90 A"/>
    <property type="chains" value="M/a=21-266"/>
</dbReference>
<dbReference type="PDB" id="4QW3">
    <property type="method" value="X-ray"/>
    <property type="resolution" value="2.90 A"/>
    <property type="chains" value="M/a=21-266"/>
</dbReference>
<dbReference type="PDB" id="4QW4">
    <property type="method" value="X-ray"/>
    <property type="resolution" value="2.80 A"/>
    <property type="chains" value="M/a=21-266"/>
</dbReference>
<dbReference type="PDB" id="4QW5">
    <property type="method" value="X-ray"/>
    <property type="resolution" value="3.00 A"/>
    <property type="chains" value="M/a=21-266"/>
</dbReference>
<dbReference type="PDB" id="4QW6">
    <property type="method" value="X-ray"/>
    <property type="resolution" value="2.90 A"/>
    <property type="chains" value="M/a=21-266"/>
</dbReference>
<dbReference type="PDB" id="4QW7">
    <property type="method" value="X-ray"/>
    <property type="resolution" value="2.70 A"/>
    <property type="chains" value="M/a=21-266"/>
</dbReference>
<dbReference type="PDB" id="4QWF">
    <property type="method" value="X-ray"/>
    <property type="resolution" value="3.00 A"/>
    <property type="chains" value="M/a=21-266"/>
</dbReference>
<dbReference type="PDB" id="4QWG">
    <property type="method" value="X-ray"/>
    <property type="resolution" value="2.60 A"/>
    <property type="chains" value="M/a=21-266"/>
</dbReference>
<dbReference type="PDB" id="4QWI">
    <property type="method" value="X-ray"/>
    <property type="resolution" value="2.60 A"/>
    <property type="chains" value="M/a=21-266"/>
</dbReference>
<dbReference type="PDB" id="4QWJ">
    <property type="method" value="X-ray"/>
    <property type="resolution" value="2.90 A"/>
    <property type="chains" value="M/a=21-266"/>
</dbReference>
<dbReference type="PDB" id="4QWK">
    <property type="method" value="X-ray"/>
    <property type="resolution" value="2.80 A"/>
    <property type="chains" value="M/a=21-266"/>
</dbReference>
<dbReference type="PDB" id="4QWL">
    <property type="method" value="X-ray"/>
    <property type="resolution" value="2.60 A"/>
    <property type="chains" value="M/a=21-266"/>
</dbReference>
<dbReference type="PDB" id="4QWR">
    <property type="method" value="X-ray"/>
    <property type="resolution" value="2.90 A"/>
    <property type="chains" value="M/a=21-266"/>
</dbReference>
<dbReference type="PDB" id="4QWS">
    <property type="method" value="X-ray"/>
    <property type="resolution" value="3.00 A"/>
    <property type="chains" value="M/a=21-266"/>
</dbReference>
<dbReference type="PDB" id="4QWU">
    <property type="method" value="X-ray"/>
    <property type="resolution" value="3.00 A"/>
    <property type="chains" value="M/a=21-266"/>
</dbReference>
<dbReference type="PDB" id="4QWX">
    <property type="method" value="X-ray"/>
    <property type="resolution" value="2.90 A"/>
    <property type="chains" value="M/a=21-266"/>
</dbReference>
<dbReference type="PDB" id="4QXJ">
    <property type="method" value="X-ray"/>
    <property type="resolution" value="2.80 A"/>
    <property type="chains" value="M/a=21-266"/>
</dbReference>
<dbReference type="PDB" id="4QZ0">
    <property type="method" value="X-ray"/>
    <property type="resolution" value="3.00 A"/>
    <property type="chains" value="M/a=21-266"/>
</dbReference>
<dbReference type="PDB" id="4QZ1">
    <property type="method" value="X-ray"/>
    <property type="resolution" value="3.00 A"/>
    <property type="chains" value="M/a=21-266"/>
</dbReference>
<dbReference type="PDB" id="4QZ2">
    <property type="method" value="X-ray"/>
    <property type="resolution" value="2.70 A"/>
    <property type="chains" value="M/a=21-266"/>
</dbReference>
<dbReference type="PDB" id="4QZ3">
    <property type="method" value="X-ray"/>
    <property type="resolution" value="2.80 A"/>
    <property type="chains" value="M/a=21-266"/>
</dbReference>
<dbReference type="PDB" id="4QZ4">
    <property type="method" value="X-ray"/>
    <property type="resolution" value="3.00 A"/>
    <property type="chains" value="M/a=21-266"/>
</dbReference>
<dbReference type="PDB" id="4QZ5">
    <property type="method" value="X-ray"/>
    <property type="resolution" value="2.80 A"/>
    <property type="chains" value="M/a=21-266"/>
</dbReference>
<dbReference type="PDB" id="4QZ6">
    <property type="method" value="X-ray"/>
    <property type="resolution" value="2.90 A"/>
    <property type="chains" value="M/a=21-266"/>
</dbReference>
<dbReference type="PDB" id="4QZ7">
    <property type="method" value="X-ray"/>
    <property type="resolution" value="2.80 A"/>
    <property type="chains" value="M/a=21-266"/>
</dbReference>
<dbReference type="PDB" id="4QZW">
    <property type="method" value="X-ray"/>
    <property type="resolution" value="3.00 A"/>
    <property type="chains" value="M/a=21-266"/>
</dbReference>
<dbReference type="PDB" id="4QZX">
    <property type="method" value="X-ray"/>
    <property type="resolution" value="2.60 A"/>
    <property type="chains" value="M/a=21-266"/>
</dbReference>
<dbReference type="PDB" id="4QZZ">
    <property type="method" value="X-ray"/>
    <property type="resolution" value="2.90 A"/>
    <property type="chains" value="M/a=21-266"/>
</dbReference>
<dbReference type="PDB" id="4R00">
    <property type="method" value="X-ray"/>
    <property type="resolution" value="2.80 A"/>
    <property type="chains" value="M/a=21-266"/>
</dbReference>
<dbReference type="PDB" id="4R02">
    <property type="method" value="X-ray"/>
    <property type="resolution" value="2.50 A"/>
    <property type="chains" value="M/a=21-266"/>
</dbReference>
<dbReference type="PDB" id="4R17">
    <property type="method" value="X-ray"/>
    <property type="resolution" value="2.10 A"/>
    <property type="chains" value="M/a=21-266"/>
</dbReference>
<dbReference type="PDB" id="4R18">
    <property type="method" value="X-ray"/>
    <property type="resolution" value="2.40 A"/>
    <property type="chains" value="M/a=21-266"/>
</dbReference>
<dbReference type="PDB" id="4RUR">
    <property type="method" value="X-ray"/>
    <property type="resolution" value="2.50 A"/>
    <property type="chains" value="M/a=21-266"/>
</dbReference>
<dbReference type="PDB" id="4V7O">
    <property type="method" value="X-ray"/>
    <property type="resolution" value="3.00 A"/>
    <property type="chains" value="A4/AR/B2/BN=34-266"/>
</dbReference>
<dbReference type="PDB" id="4X6Z">
    <property type="method" value="X-ray"/>
    <property type="resolution" value="2.70 A"/>
    <property type="chains" value="2/N=1-266"/>
</dbReference>
<dbReference type="PDB" id="4Y69">
    <property type="method" value="X-ray"/>
    <property type="resolution" value="2.90 A"/>
    <property type="chains" value="M/a=21-266"/>
</dbReference>
<dbReference type="PDB" id="4Y6A">
    <property type="method" value="X-ray"/>
    <property type="resolution" value="2.60 A"/>
    <property type="chains" value="M/a=21-266"/>
</dbReference>
<dbReference type="PDB" id="4Y6V">
    <property type="method" value="X-ray"/>
    <property type="resolution" value="2.80 A"/>
    <property type="chains" value="M/a=21-266"/>
</dbReference>
<dbReference type="PDB" id="4Y6Z">
    <property type="method" value="X-ray"/>
    <property type="resolution" value="2.70 A"/>
    <property type="chains" value="M/a=21-266"/>
</dbReference>
<dbReference type="PDB" id="4Y70">
    <property type="method" value="X-ray"/>
    <property type="resolution" value="2.40 A"/>
    <property type="chains" value="M/a=21-266"/>
</dbReference>
<dbReference type="PDB" id="4Y74">
    <property type="method" value="X-ray"/>
    <property type="resolution" value="2.70 A"/>
    <property type="chains" value="M/a=21-266"/>
</dbReference>
<dbReference type="PDB" id="4Y75">
    <property type="method" value="X-ray"/>
    <property type="resolution" value="2.80 A"/>
    <property type="chains" value="M/a=21-266"/>
</dbReference>
<dbReference type="PDB" id="4Y77">
    <property type="method" value="X-ray"/>
    <property type="resolution" value="2.50 A"/>
    <property type="chains" value="M/a=21-266"/>
</dbReference>
<dbReference type="PDB" id="4Y78">
    <property type="method" value="X-ray"/>
    <property type="resolution" value="2.80 A"/>
    <property type="chains" value="M/a=21-266"/>
</dbReference>
<dbReference type="PDB" id="4Y7W">
    <property type="method" value="X-ray"/>
    <property type="resolution" value="2.50 A"/>
    <property type="chains" value="M/a=21-266"/>
</dbReference>
<dbReference type="PDB" id="4Y7X">
    <property type="method" value="X-ray"/>
    <property type="resolution" value="2.60 A"/>
    <property type="chains" value="M/a=21-266"/>
</dbReference>
<dbReference type="PDB" id="4Y7Y">
    <property type="method" value="X-ray"/>
    <property type="resolution" value="2.40 A"/>
    <property type="chains" value="M/a=21-266"/>
</dbReference>
<dbReference type="PDB" id="4Y80">
    <property type="method" value="X-ray"/>
    <property type="resolution" value="2.50 A"/>
    <property type="chains" value="M/a=21-266"/>
</dbReference>
<dbReference type="PDB" id="4Y81">
    <property type="method" value="X-ray"/>
    <property type="resolution" value="2.80 A"/>
    <property type="chains" value="M/a=21-266"/>
</dbReference>
<dbReference type="PDB" id="4Y82">
    <property type="method" value="X-ray"/>
    <property type="resolution" value="2.80 A"/>
    <property type="chains" value="M/a=21-266"/>
</dbReference>
<dbReference type="PDB" id="4Y84">
    <property type="method" value="X-ray"/>
    <property type="resolution" value="2.70 A"/>
    <property type="chains" value="M/a=21-266"/>
</dbReference>
<dbReference type="PDB" id="4Y8G">
    <property type="method" value="X-ray"/>
    <property type="resolution" value="2.60 A"/>
    <property type="chains" value="M/a=21-266"/>
</dbReference>
<dbReference type="PDB" id="4Y8H">
    <property type="method" value="X-ray"/>
    <property type="resolution" value="2.50 A"/>
    <property type="chains" value="M/a=21-266"/>
</dbReference>
<dbReference type="PDB" id="4Y8I">
    <property type="method" value="X-ray"/>
    <property type="resolution" value="2.60 A"/>
    <property type="chains" value="M/a=21-266"/>
</dbReference>
<dbReference type="PDB" id="4Y8J">
    <property type="method" value="X-ray"/>
    <property type="resolution" value="2.70 A"/>
    <property type="chains" value="M/a=21-266"/>
</dbReference>
<dbReference type="PDB" id="4Y8K">
    <property type="method" value="X-ray"/>
    <property type="resolution" value="2.60 A"/>
    <property type="chains" value="M/a=21-266"/>
</dbReference>
<dbReference type="PDB" id="4Y8L">
    <property type="method" value="X-ray"/>
    <property type="resolution" value="2.40 A"/>
    <property type="chains" value="M/a=21-266"/>
</dbReference>
<dbReference type="PDB" id="4Y8M">
    <property type="method" value="X-ray"/>
    <property type="resolution" value="2.80 A"/>
    <property type="chains" value="M/a=21-259"/>
</dbReference>
<dbReference type="PDB" id="4Y8N">
    <property type="method" value="X-ray"/>
    <property type="resolution" value="2.60 A"/>
    <property type="chains" value="M/a=21-259"/>
</dbReference>
<dbReference type="PDB" id="4Y8O">
    <property type="method" value="X-ray"/>
    <property type="resolution" value="2.70 A"/>
    <property type="chains" value="M/a=21-259"/>
</dbReference>
<dbReference type="PDB" id="4Y8P">
    <property type="method" value="X-ray"/>
    <property type="resolution" value="2.80 A"/>
    <property type="chains" value="M/a=21-259"/>
</dbReference>
<dbReference type="PDB" id="4Y8Q">
    <property type="method" value="X-ray"/>
    <property type="resolution" value="2.60 A"/>
    <property type="chains" value="M/a=21-259"/>
</dbReference>
<dbReference type="PDB" id="4Y8R">
    <property type="method" value="X-ray"/>
    <property type="resolution" value="2.70 A"/>
    <property type="chains" value="M/a=21-266"/>
</dbReference>
<dbReference type="PDB" id="4Y8S">
    <property type="method" value="X-ray"/>
    <property type="resolution" value="2.70 A"/>
    <property type="chains" value="M/a=21-266"/>
</dbReference>
<dbReference type="PDB" id="4Y8T">
    <property type="method" value="X-ray"/>
    <property type="resolution" value="2.70 A"/>
    <property type="chains" value="M/a=21-266"/>
</dbReference>
<dbReference type="PDB" id="4Y8U">
    <property type="method" value="X-ray"/>
    <property type="resolution" value="2.90 A"/>
    <property type="chains" value="M/a=21-266"/>
</dbReference>
<dbReference type="PDB" id="4Y9Y">
    <property type="method" value="X-ray"/>
    <property type="resolution" value="2.80 A"/>
    <property type="chains" value="M/a=21-266"/>
</dbReference>
<dbReference type="PDB" id="4Y9Z">
    <property type="method" value="X-ray"/>
    <property type="resolution" value="2.80 A"/>
    <property type="chains" value="M/a=21-266"/>
</dbReference>
<dbReference type="PDB" id="4YA0">
    <property type="method" value="X-ray"/>
    <property type="resolution" value="2.80 A"/>
    <property type="chains" value="M/a=21-266"/>
</dbReference>
<dbReference type="PDB" id="4YA1">
    <property type="method" value="X-ray"/>
    <property type="resolution" value="2.90 A"/>
    <property type="chains" value="M/a=21-266"/>
</dbReference>
<dbReference type="PDB" id="4YA2">
    <property type="method" value="X-ray"/>
    <property type="resolution" value="2.70 A"/>
    <property type="chains" value="M/a=21-266"/>
</dbReference>
<dbReference type="PDB" id="4YA3">
    <property type="method" value="X-ray"/>
    <property type="resolution" value="2.70 A"/>
    <property type="chains" value="M/a=21-266"/>
</dbReference>
<dbReference type="PDB" id="4YA4">
    <property type="method" value="X-ray"/>
    <property type="resolution" value="2.90 A"/>
    <property type="chains" value="M/a=21-266"/>
</dbReference>
<dbReference type="PDB" id="4YA5">
    <property type="method" value="X-ray"/>
    <property type="resolution" value="2.50 A"/>
    <property type="chains" value="M/a=21-266"/>
</dbReference>
<dbReference type="PDB" id="4YA7">
    <property type="method" value="X-ray"/>
    <property type="resolution" value="2.70 A"/>
    <property type="chains" value="M/a=21-266"/>
</dbReference>
<dbReference type="PDB" id="4YA9">
    <property type="method" value="X-ray"/>
    <property type="resolution" value="2.70 A"/>
    <property type="chains" value="M/a=21-266"/>
</dbReference>
<dbReference type="PDB" id="4Z1L">
    <property type="method" value="X-ray"/>
    <property type="resolution" value="3.00 A"/>
    <property type="chains" value="M/a=21-266"/>
</dbReference>
<dbReference type="PDB" id="5A5B">
    <property type="method" value="EM"/>
    <property type="resolution" value="9.50 A"/>
    <property type="chains" value="7=1-266"/>
</dbReference>
<dbReference type="PDB" id="5AHJ">
    <property type="method" value="X-ray"/>
    <property type="resolution" value="2.80 A"/>
    <property type="chains" value="M/a=34-266"/>
</dbReference>
<dbReference type="PDB" id="5BOU">
    <property type="method" value="X-ray"/>
    <property type="resolution" value="2.60 A"/>
    <property type="chains" value="M/a=21-266"/>
</dbReference>
<dbReference type="PDB" id="5BXL">
    <property type="method" value="X-ray"/>
    <property type="resolution" value="2.80 A"/>
    <property type="chains" value="M/a=21-266"/>
</dbReference>
<dbReference type="PDB" id="5BXN">
    <property type="method" value="X-ray"/>
    <property type="resolution" value="2.80 A"/>
    <property type="chains" value="M/a=21-266"/>
</dbReference>
<dbReference type="PDB" id="5CGF">
    <property type="method" value="X-ray"/>
    <property type="resolution" value="2.80 A"/>
    <property type="chains" value="M/a=21-266"/>
</dbReference>
<dbReference type="PDB" id="5CGG">
    <property type="method" value="X-ray"/>
    <property type="resolution" value="2.90 A"/>
    <property type="chains" value="M/a=21-266"/>
</dbReference>
<dbReference type="PDB" id="5CGH">
    <property type="method" value="X-ray"/>
    <property type="resolution" value="2.50 A"/>
    <property type="chains" value="M/a=21-266"/>
</dbReference>
<dbReference type="PDB" id="5CGI">
    <property type="method" value="X-ray"/>
    <property type="resolution" value="2.80 A"/>
    <property type="chains" value="M/a=21-266"/>
</dbReference>
<dbReference type="PDB" id="5CZ4">
    <property type="method" value="X-ray"/>
    <property type="resolution" value="2.30 A"/>
    <property type="chains" value="M/a=21-266"/>
</dbReference>
<dbReference type="PDB" id="5CZ5">
    <property type="method" value="X-ray"/>
    <property type="resolution" value="2.80 A"/>
    <property type="chains" value="M/a=21-266"/>
</dbReference>
<dbReference type="PDB" id="5CZ6">
    <property type="method" value="X-ray"/>
    <property type="resolution" value="2.70 A"/>
    <property type="chains" value="M/a=21-266"/>
</dbReference>
<dbReference type="PDB" id="5CZ7">
    <property type="method" value="X-ray"/>
    <property type="resolution" value="2.50 A"/>
    <property type="chains" value="M/a=21-266"/>
</dbReference>
<dbReference type="PDB" id="5CZ8">
    <property type="method" value="X-ray"/>
    <property type="resolution" value="2.80 A"/>
    <property type="chains" value="M/a=21-266"/>
</dbReference>
<dbReference type="PDB" id="5CZ9">
    <property type="method" value="X-ray"/>
    <property type="resolution" value="2.90 A"/>
    <property type="chains" value="M/a=21-266"/>
</dbReference>
<dbReference type="PDB" id="5CZA">
    <property type="method" value="X-ray"/>
    <property type="resolution" value="2.50 A"/>
    <property type="chains" value="M/a=21-266"/>
</dbReference>
<dbReference type="PDB" id="5D0S">
    <property type="method" value="X-ray"/>
    <property type="resolution" value="2.50 A"/>
    <property type="chains" value="M/a=21-266"/>
</dbReference>
<dbReference type="PDB" id="5D0T">
    <property type="method" value="X-ray"/>
    <property type="resolution" value="2.60 A"/>
    <property type="chains" value="M/a=21-266"/>
</dbReference>
<dbReference type="PDB" id="5D0V">
    <property type="method" value="X-ray"/>
    <property type="resolution" value="2.90 A"/>
    <property type="chains" value="M/a=21-266"/>
</dbReference>
<dbReference type="PDB" id="5D0W">
    <property type="method" value="X-ray"/>
    <property type="resolution" value="2.80 A"/>
    <property type="chains" value="M/a=21-266"/>
</dbReference>
<dbReference type="PDB" id="5D0X">
    <property type="method" value="X-ray"/>
    <property type="resolution" value="2.60 A"/>
    <property type="chains" value="M/a=21-266"/>
</dbReference>
<dbReference type="PDB" id="5D0Z">
    <property type="method" value="X-ray"/>
    <property type="resolution" value="2.90 A"/>
    <property type="chains" value="M/a=21-266"/>
</dbReference>
<dbReference type="PDB" id="5DKI">
    <property type="method" value="X-ray"/>
    <property type="resolution" value="2.80 A"/>
    <property type="chains" value="M/a=21-266"/>
</dbReference>
<dbReference type="PDB" id="5DKJ">
    <property type="method" value="X-ray"/>
    <property type="resolution" value="2.80 A"/>
    <property type="chains" value="M/a=21-266"/>
</dbReference>
<dbReference type="PDB" id="5FG7">
    <property type="method" value="X-ray"/>
    <property type="resolution" value="2.70 A"/>
    <property type="chains" value="M/a=21-266"/>
</dbReference>
<dbReference type="PDB" id="5FG9">
    <property type="method" value="X-ray"/>
    <property type="resolution" value="2.60 A"/>
    <property type="chains" value="M/a=21-266"/>
</dbReference>
<dbReference type="PDB" id="5FGA">
    <property type="method" value="X-ray"/>
    <property type="resolution" value="2.70 A"/>
    <property type="chains" value="M/a=21-266"/>
</dbReference>
<dbReference type="PDB" id="5FGD">
    <property type="method" value="X-ray"/>
    <property type="resolution" value="2.80 A"/>
    <property type="chains" value="M/a=21-266"/>
</dbReference>
<dbReference type="PDB" id="5FGE">
    <property type="method" value="X-ray"/>
    <property type="resolution" value="2.60 A"/>
    <property type="chains" value="M/a=21-266"/>
</dbReference>
<dbReference type="PDB" id="5FGF">
    <property type="method" value="X-ray"/>
    <property type="resolution" value="2.60 A"/>
    <property type="chains" value="M/a=21-266"/>
</dbReference>
<dbReference type="PDB" id="5FGG">
    <property type="method" value="X-ray"/>
    <property type="resolution" value="2.70 A"/>
    <property type="chains" value="M/a=21-266"/>
</dbReference>
<dbReference type="PDB" id="5FGH">
    <property type="method" value="X-ray"/>
    <property type="resolution" value="2.80 A"/>
    <property type="chains" value="M/a=21-266"/>
</dbReference>
<dbReference type="PDB" id="5FGI">
    <property type="method" value="X-ray"/>
    <property type="resolution" value="2.90 A"/>
    <property type="chains" value="M/a=21-266"/>
</dbReference>
<dbReference type="PDB" id="5FHS">
    <property type="method" value="X-ray"/>
    <property type="resolution" value="2.70 A"/>
    <property type="chains" value="M/a=21-266"/>
</dbReference>
<dbReference type="PDB" id="5JHR">
    <property type="method" value="X-ray"/>
    <property type="resolution" value="2.90 A"/>
    <property type="chains" value="M/a=21-266"/>
</dbReference>
<dbReference type="PDB" id="5JHS">
    <property type="method" value="X-ray"/>
    <property type="resolution" value="3.00 A"/>
    <property type="chains" value="M/a=21-266"/>
</dbReference>
<dbReference type="PDB" id="5L52">
    <property type="method" value="X-ray"/>
    <property type="resolution" value="2.70 A"/>
    <property type="chains" value="M/a=21-266"/>
</dbReference>
<dbReference type="PDB" id="5L54">
    <property type="method" value="X-ray"/>
    <property type="resolution" value="2.80 A"/>
    <property type="chains" value="M/a=21-266"/>
</dbReference>
<dbReference type="PDB" id="5L55">
    <property type="method" value="X-ray"/>
    <property type="resolution" value="2.90 A"/>
    <property type="chains" value="M/a=21-266"/>
</dbReference>
<dbReference type="PDB" id="5L5A">
    <property type="method" value="X-ray"/>
    <property type="resolution" value="2.40 A"/>
    <property type="chains" value="M/a=21-266"/>
</dbReference>
<dbReference type="PDB" id="5L5B">
    <property type="method" value="X-ray"/>
    <property type="resolution" value="2.80 A"/>
    <property type="chains" value="M/a=21-266"/>
</dbReference>
<dbReference type="PDB" id="5L5D">
    <property type="method" value="X-ray"/>
    <property type="resolution" value="2.80 A"/>
    <property type="chains" value="M/a=21-266"/>
</dbReference>
<dbReference type="PDB" id="5L5E">
    <property type="method" value="X-ray"/>
    <property type="resolution" value="2.90 A"/>
    <property type="chains" value="M/a=21-266"/>
</dbReference>
<dbReference type="PDB" id="5L5F">
    <property type="method" value="X-ray"/>
    <property type="resolution" value="2.50 A"/>
    <property type="chains" value="M/a=21-266"/>
</dbReference>
<dbReference type="PDB" id="5L5H">
    <property type="method" value="X-ray"/>
    <property type="resolution" value="2.60 A"/>
    <property type="chains" value="M/a=21-266"/>
</dbReference>
<dbReference type="PDB" id="5L5I">
    <property type="method" value="X-ray"/>
    <property type="resolution" value="2.90 A"/>
    <property type="chains" value="M/a=21-266"/>
</dbReference>
<dbReference type="PDB" id="5L5J">
    <property type="method" value="X-ray"/>
    <property type="resolution" value="2.90 A"/>
    <property type="chains" value="M/a=21-266"/>
</dbReference>
<dbReference type="PDB" id="5L5O">
    <property type="method" value="X-ray"/>
    <property type="resolution" value="2.60 A"/>
    <property type="chains" value="M/a=21-266"/>
</dbReference>
<dbReference type="PDB" id="5L5P">
    <property type="method" value="X-ray"/>
    <property type="resolution" value="2.80 A"/>
    <property type="chains" value="M/a=21-266"/>
</dbReference>
<dbReference type="PDB" id="5L5Q">
    <property type="method" value="X-ray"/>
    <property type="resolution" value="2.80 A"/>
    <property type="chains" value="M/a=21-266"/>
</dbReference>
<dbReference type="PDB" id="5L5R">
    <property type="method" value="X-ray"/>
    <property type="resolution" value="2.90 A"/>
    <property type="chains" value="M/a=21-266"/>
</dbReference>
<dbReference type="PDB" id="5L5S">
    <property type="method" value="X-ray"/>
    <property type="resolution" value="2.60 A"/>
    <property type="chains" value="M/a=21-266"/>
</dbReference>
<dbReference type="PDB" id="5L5T">
    <property type="method" value="X-ray"/>
    <property type="resolution" value="2.90 A"/>
    <property type="chains" value="M/a=21-266"/>
</dbReference>
<dbReference type="PDB" id="5L5U">
    <property type="method" value="X-ray"/>
    <property type="resolution" value="2.60 A"/>
    <property type="chains" value="M/a=21-266"/>
</dbReference>
<dbReference type="PDB" id="5L5V">
    <property type="method" value="X-ray"/>
    <property type="resolution" value="2.70 A"/>
    <property type="chains" value="M/a=21-266"/>
</dbReference>
<dbReference type="PDB" id="5L5W">
    <property type="method" value="X-ray"/>
    <property type="resolution" value="2.80 A"/>
    <property type="chains" value="M/a=21-266"/>
</dbReference>
<dbReference type="PDB" id="5L5X">
    <property type="method" value="X-ray"/>
    <property type="resolution" value="2.90 A"/>
    <property type="chains" value="M/a=21-266"/>
</dbReference>
<dbReference type="PDB" id="5L5Y">
    <property type="method" value="X-ray"/>
    <property type="resolution" value="2.70 A"/>
    <property type="chains" value="M/a=21-266"/>
</dbReference>
<dbReference type="PDB" id="5L5Z">
    <property type="method" value="X-ray"/>
    <property type="resolution" value="2.70 A"/>
    <property type="chains" value="M/a=21-266"/>
</dbReference>
<dbReference type="PDB" id="5L60">
    <property type="method" value="X-ray"/>
    <property type="resolution" value="2.70 A"/>
    <property type="chains" value="M/a=21-266"/>
</dbReference>
<dbReference type="PDB" id="5L61">
    <property type="method" value="X-ray"/>
    <property type="resolution" value="2.80 A"/>
    <property type="chains" value="M/a=21-266"/>
</dbReference>
<dbReference type="PDB" id="5L62">
    <property type="method" value="X-ray"/>
    <property type="resolution" value="2.80 A"/>
    <property type="chains" value="M/a=21-266"/>
</dbReference>
<dbReference type="PDB" id="5L63">
    <property type="method" value="X-ray"/>
    <property type="resolution" value="2.70 A"/>
    <property type="chains" value="M/a=21-266"/>
</dbReference>
<dbReference type="PDB" id="5L64">
    <property type="method" value="X-ray"/>
    <property type="resolution" value="2.70 A"/>
    <property type="chains" value="M/a=21-266"/>
</dbReference>
<dbReference type="PDB" id="5L65">
    <property type="method" value="X-ray"/>
    <property type="resolution" value="2.90 A"/>
    <property type="chains" value="M/a=21-266"/>
</dbReference>
<dbReference type="PDB" id="5L66">
    <property type="method" value="X-ray"/>
    <property type="resolution" value="2.80 A"/>
    <property type="chains" value="M/a=21-266"/>
</dbReference>
<dbReference type="PDB" id="5L67">
    <property type="method" value="X-ray"/>
    <property type="resolution" value="2.60 A"/>
    <property type="chains" value="M/a=21-266"/>
</dbReference>
<dbReference type="PDB" id="5L68">
    <property type="method" value="X-ray"/>
    <property type="resolution" value="2.80 A"/>
    <property type="chains" value="M/a=21-266"/>
</dbReference>
<dbReference type="PDB" id="5L69">
    <property type="method" value="X-ray"/>
    <property type="resolution" value="2.70 A"/>
    <property type="chains" value="M/a=21-266"/>
</dbReference>
<dbReference type="PDB" id="5L6A">
    <property type="method" value="X-ray"/>
    <property type="resolution" value="2.80 A"/>
    <property type="chains" value="M/a=21-266"/>
</dbReference>
<dbReference type="PDB" id="5L6B">
    <property type="method" value="X-ray"/>
    <property type="resolution" value="2.60 A"/>
    <property type="chains" value="M/a=21-266"/>
</dbReference>
<dbReference type="PDB" id="5L6C">
    <property type="method" value="X-ray"/>
    <property type="resolution" value="2.60 A"/>
    <property type="chains" value="M/a=21-266"/>
</dbReference>
<dbReference type="PDB" id="5LAI">
    <property type="method" value="X-ray"/>
    <property type="resolution" value="2.50 A"/>
    <property type="chains" value="M/a=21-266"/>
</dbReference>
<dbReference type="PDB" id="5LAJ">
    <property type="method" value="X-ray"/>
    <property type="resolution" value="2.90 A"/>
    <property type="chains" value="M/a=21-266"/>
</dbReference>
<dbReference type="PDB" id="5LTT">
    <property type="method" value="X-ray"/>
    <property type="resolution" value="2.70 A"/>
    <property type="chains" value="M/a=21-266"/>
</dbReference>
<dbReference type="PDB" id="5M2B">
    <property type="method" value="X-ray"/>
    <property type="resolution" value="2.70 A"/>
    <property type="chains" value="M/a=21-266"/>
</dbReference>
<dbReference type="PDB" id="5MP9">
    <property type="method" value="EM"/>
    <property type="resolution" value="4.10 A"/>
    <property type="chains" value="7/n=1-266"/>
</dbReference>
<dbReference type="PDB" id="5MPA">
    <property type="method" value="EM"/>
    <property type="resolution" value="4.50 A"/>
    <property type="chains" value="7/n=1-266"/>
</dbReference>
<dbReference type="PDB" id="5MPB">
    <property type="method" value="EM"/>
    <property type="resolution" value="7.80 A"/>
    <property type="chains" value="7/n=1-266"/>
</dbReference>
<dbReference type="PDB" id="5MPC">
    <property type="method" value="EM"/>
    <property type="resolution" value="7.70 A"/>
    <property type="chains" value="7/n=1-266"/>
</dbReference>
<dbReference type="PDB" id="5NIF">
    <property type="method" value="X-ray"/>
    <property type="resolution" value="3.00 A"/>
    <property type="chains" value="2/N=1-266"/>
</dbReference>
<dbReference type="PDB" id="5WVI">
    <property type="method" value="EM"/>
    <property type="resolution" value="6.30 A"/>
    <property type="chains" value="7/a=1-266"/>
</dbReference>
<dbReference type="PDB" id="5WVK">
    <property type="method" value="EM"/>
    <property type="resolution" value="4.20 A"/>
    <property type="chains" value="7/a=1-266"/>
</dbReference>
<dbReference type="PDB" id="6EF3">
    <property type="method" value="EM"/>
    <property type="resolution" value="4.17 A"/>
    <property type="chains" value="7=1-266"/>
</dbReference>
<dbReference type="PDB" id="6FVT">
    <property type="method" value="EM"/>
    <property type="resolution" value="4.10 A"/>
    <property type="chains" value="7/n=34-265"/>
</dbReference>
<dbReference type="PDB" id="6FVU">
    <property type="method" value="EM"/>
    <property type="resolution" value="4.50 A"/>
    <property type="chains" value="7/n=34-265"/>
</dbReference>
<dbReference type="PDB" id="6FVV">
    <property type="method" value="EM"/>
    <property type="resolution" value="5.40 A"/>
    <property type="chains" value="7/n=34-265"/>
</dbReference>
<dbReference type="PDB" id="6FVW">
    <property type="method" value="EM"/>
    <property type="resolution" value="4.50 A"/>
    <property type="chains" value="7/n=34-265"/>
</dbReference>
<dbReference type="PDB" id="6FVX">
    <property type="method" value="EM"/>
    <property type="resolution" value="4.90 A"/>
    <property type="chains" value="7/n=34-265"/>
</dbReference>
<dbReference type="PDB" id="6FVY">
    <property type="method" value="EM"/>
    <property type="resolution" value="6.10 A"/>
    <property type="chains" value="7/n=34-265"/>
</dbReference>
<dbReference type="PDB" id="6G7F">
    <property type="method" value="X-ray"/>
    <property type="resolution" value="2.70 A"/>
    <property type="chains" value="M/a=21-266"/>
</dbReference>
<dbReference type="PDB" id="6G8M">
    <property type="method" value="X-ray"/>
    <property type="resolution" value="2.70 A"/>
    <property type="chains" value="M/a=21-266"/>
</dbReference>
<dbReference type="PDB" id="6G8N">
    <property type="method" value="X-ray"/>
    <property type="resolution" value="3.00 A"/>
    <property type="chains" value="M/a=21-266"/>
</dbReference>
<dbReference type="PDB" id="6GOP">
    <property type="method" value="X-ray"/>
    <property type="resolution" value="2.90 A"/>
    <property type="chains" value="M/a=21-266"/>
</dbReference>
<dbReference type="PDB" id="6H39">
    <property type="method" value="X-ray"/>
    <property type="resolution" value="2.50 A"/>
    <property type="chains" value="M/a=21-266"/>
</dbReference>
<dbReference type="PDB" id="6HTB">
    <property type="method" value="X-ray"/>
    <property type="resolution" value="2.70 A"/>
    <property type="chains" value="M/a=21-266"/>
</dbReference>
<dbReference type="PDB" id="6HTC">
    <property type="method" value="X-ray"/>
    <property type="resolution" value="2.80 A"/>
    <property type="chains" value="M/a=21-266"/>
</dbReference>
<dbReference type="PDB" id="6HTD">
    <property type="method" value="X-ray"/>
    <property type="resolution" value="3.00 A"/>
    <property type="chains" value="M/a=21-266"/>
</dbReference>
<dbReference type="PDB" id="6HTP">
    <property type="method" value="X-ray"/>
    <property type="resolution" value="3.00 A"/>
    <property type="chains" value="M/a=21-266"/>
</dbReference>
<dbReference type="PDB" id="6HTR">
    <property type="method" value="X-ray"/>
    <property type="resolution" value="2.60 A"/>
    <property type="chains" value="M/a=21-266"/>
</dbReference>
<dbReference type="PDB" id="6HUB">
    <property type="method" value="X-ray"/>
    <property type="resolution" value="2.90 A"/>
    <property type="chains" value="M/a=21-266"/>
</dbReference>
<dbReference type="PDB" id="6HUC">
    <property type="method" value="X-ray"/>
    <property type="resolution" value="3.00 A"/>
    <property type="chains" value="M/a=21-266"/>
</dbReference>
<dbReference type="PDB" id="6HUQ">
    <property type="method" value="X-ray"/>
    <property type="resolution" value="3.00 A"/>
    <property type="chains" value="M/a=21-266"/>
</dbReference>
<dbReference type="PDB" id="6HUU">
    <property type="method" value="X-ray"/>
    <property type="resolution" value="2.80 A"/>
    <property type="chains" value="M/a=21-266"/>
</dbReference>
<dbReference type="PDB" id="6HUV">
    <property type="method" value="X-ray"/>
    <property type="resolution" value="3.10 A"/>
    <property type="chains" value="M/a=21-266"/>
</dbReference>
<dbReference type="PDB" id="6HV3">
    <property type="method" value="X-ray"/>
    <property type="resolution" value="2.70 A"/>
    <property type="chains" value="M/a=21-266"/>
</dbReference>
<dbReference type="PDB" id="6HV4">
    <property type="method" value="X-ray"/>
    <property type="resolution" value="3.00 A"/>
    <property type="chains" value="M/a=21-266"/>
</dbReference>
<dbReference type="PDB" id="6HV5">
    <property type="method" value="X-ray"/>
    <property type="resolution" value="3.00 A"/>
    <property type="chains" value="M/a=21-266"/>
</dbReference>
<dbReference type="PDB" id="6HV7">
    <property type="method" value="X-ray"/>
    <property type="resolution" value="3.40 A"/>
    <property type="chains" value="M/a=21-266"/>
</dbReference>
<dbReference type="PDB" id="6HVA">
    <property type="method" value="X-ray"/>
    <property type="resolution" value="2.90 A"/>
    <property type="chains" value="M/a=21-266"/>
</dbReference>
<dbReference type="PDB" id="6HVR">
    <property type="method" value="X-ray"/>
    <property type="resolution" value="2.70 A"/>
    <property type="chains" value="M/a=21-266"/>
</dbReference>
<dbReference type="PDB" id="6HVS">
    <property type="method" value="X-ray"/>
    <property type="resolution" value="3.10 A"/>
    <property type="chains" value="M/a=21-266"/>
</dbReference>
<dbReference type="PDB" id="6HVT">
    <property type="method" value="X-ray"/>
    <property type="resolution" value="2.90 A"/>
    <property type="chains" value="M/a=21-266"/>
</dbReference>
<dbReference type="PDB" id="6HVU">
    <property type="method" value="X-ray"/>
    <property type="resolution" value="2.90 A"/>
    <property type="chains" value="M/a=21-266"/>
</dbReference>
<dbReference type="PDB" id="6HVV">
    <property type="method" value="X-ray"/>
    <property type="resolution" value="2.70 A"/>
    <property type="chains" value="M/a=21-266"/>
</dbReference>
<dbReference type="PDB" id="6HVW">
    <property type="method" value="X-ray"/>
    <property type="resolution" value="3.00 A"/>
    <property type="chains" value="M/a=21-266"/>
</dbReference>
<dbReference type="PDB" id="6HVX">
    <property type="method" value="X-ray"/>
    <property type="resolution" value="2.80 A"/>
    <property type="chains" value="M/a=21-266"/>
</dbReference>
<dbReference type="PDB" id="6HVY">
    <property type="method" value="X-ray"/>
    <property type="resolution" value="2.70 A"/>
    <property type="chains" value="M/a=21-266"/>
</dbReference>
<dbReference type="PDB" id="6HW0">
    <property type="method" value="X-ray"/>
    <property type="resolution" value="2.80 A"/>
    <property type="chains" value="M/a=21-266"/>
</dbReference>
<dbReference type="PDB" id="6HW3">
    <property type="method" value="X-ray"/>
    <property type="resolution" value="2.60 A"/>
    <property type="chains" value="M/a=21-266"/>
</dbReference>
<dbReference type="PDB" id="6HW4">
    <property type="method" value="X-ray"/>
    <property type="resolution" value="2.90 A"/>
    <property type="chains" value="M/a=21-266"/>
</dbReference>
<dbReference type="PDB" id="6HW5">
    <property type="method" value="X-ray"/>
    <property type="resolution" value="2.90 A"/>
    <property type="chains" value="M/a=21-266"/>
</dbReference>
<dbReference type="PDB" id="6HW6">
    <property type="method" value="X-ray"/>
    <property type="resolution" value="2.70 A"/>
    <property type="chains" value="M/a=21-266"/>
</dbReference>
<dbReference type="PDB" id="6HW7">
    <property type="method" value="X-ray"/>
    <property type="resolution" value="2.70 A"/>
    <property type="chains" value="M/a=21-266"/>
</dbReference>
<dbReference type="PDB" id="6HW8">
    <property type="method" value="X-ray"/>
    <property type="resolution" value="2.80 A"/>
    <property type="chains" value="M/a=21-266"/>
</dbReference>
<dbReference type="PDB" id="6HW9">
    <property type="method" value="X-ray"/>
    <property type="resolution" value="2.80 A"/>
    <property type="chains" value="M/a=21-266"/>
</dbReference>
<dbReference type="PDB" id="6HWA">
    <property type="method" value="X-ray"/>
    <property type="resolution" value="2.80 A"/>
    <property type="chains" value="M/a=21-266"/>
</dbReference>
<dbReference type="PDB" id="6HWB">
    <property type="method" value="X-ray"/>
    <property type="resolution" value="2.60 A"/>
    <property type="chains" value="M/a=21-266"/>
</dbReference>
<dbReference type="PDB" id="6HWC">
    <property type="method" value="X-ray"/>
    <property type="resolution" value="2.80 A"/>
    <property type="chains" value="M/a=21-266"/>
</dbReference>
<dbReference type="PDB" id="6HWD">
    <property type="method" value="X-ray"/>
    <property type="resolution" value="2.80 A"/>
    <property type="chains" value="M/a=21-266"/>
</dbReference>
<dbReference type="PDB" id="6HWE">
    <property type="method" value="X-ray"/>
    <property type="resolution" value="2.30 A"/>
    <property type="chains" value="M/a=21-266"/>
</dbReference>
<dbReference type="PDB" id="6HWF">
    <property type="method" value="X-ray"/>
    <property type="resolution" value="2.50 A"/>
    <property type="chains" value="M/a=21-266"/>
</dbReference>
<dbReference type="PDB" id="6J2C">
    <property type="method" value="EM"/>
    <property type="resolution" value="7.00 A"/>
    <property type="chains" value="7/a=1-266"/>
</dbReference>
<dbReference type="PDB" id="6J2N">
    <property type="method" value="EM"/>
    <property type="resolution" value="7.50 A"/>
    <property type="chains" value="7/a=1-266"/>
</dbReference>
<dbReference type="PDB" id="6J2Q">
    <property type="method" value="EM"/>
    <property type="resolution" value="3.80 A"/>
    <property type="chains" value="7/a=1-266"/>
</dbReference>
<dbReference type="PDB" id="6J2X">
    <property type="method" value="EM"/>
    <property type="resolution" value="3.80 A"/>
    <property type="chains" value="7/a=1-266"/>
</dbReference>
<dbReference type="PDB" id="6J30">
    <property type="method" value="EM"/>
    <property type="resolution" value="4.50 A"/>
    <property type="chains" value="7/a=1-266"/>
</dbReference>
<dbReference type="PDB" id="6ZOU">
    <property type="method" value="X-ray"/>
    <property type="resolution" value="2.90 A"/>
    <property type="chains" value="M/a=21-266"/>
</dbReference>
<dbReference type="PDB" id="6ZP6">
    <property type="method" value="X-ray"/>
    <property type="resolution" value="2.80 A"/>
    <property type="chains" value="M/a=21-266"/>
</dbReference>
<dbReference type="PDB" id="6ZP8">
    <property type="method" value="X-ray"/>
    <property type="resolution" value="3.00 A"/>
    <property type="chains" value="M/a=21-266"/>
</dbReference>
<dbReference type="PDB" id="7LS5">
    <property type="method" value="EM"/>
    <property type="resolution" value="2.74 A"/>
    <property type="chains" value="2/N=1-266"/>
</dbReference>
<dbReference type="PDB" id="7O2L">
    <property type="method" value="X-ray"/>
    <property type="resolution" value="3.00 A"/>
    <property type="chains" value="M/a=21-266"/>
</dbReference>
<dbReference type="PDB" id="7QO3">
    <property type="method" value="EM"/>
    <property type="resolution" value="6.10 A"/>
    <property type="chains" value="7/n=1-266"/>
</dbReference>
<dbReference type="PDB" id="7QO5">
    <property type="method" value="EM"/>
    <property type="resolution" value="6.00 A"/>
    <property type="chains" value="7/n=1-266"/>
</dbReference>
<dbReference type="PDB" id="7QO6">
    <property type="method" value="EM"/>
    <property type="resolution" value="6.30 A"/>
    <property type="chains" value="7/n=1-266"/>
</dbReference>
<dbReference type="PDB" id="7TEJ">
    <property type="method" value="EM"/>
    <property type="resolution" value="2.74 A"/>
    <property type="chains" value="2/N=1-266"/>
</dbReference>
<dbReference type="PDB" id="7TEO">
    <property type="method" value="EM"/>
    <property type="resolution" value="2.97 A"/>
    <property type="chains" value="2/N=1-266"/>
</dbReference>
<dbReference type="PDB" id="8BW1">
    <property type="method" value="X-ray"/>
    <property type="resolution" value="3.25 A"/>
    <property type="chains" value="M/a=21-266"/>
</dbReference>
<dbReference type="PDB" id="8OHZ">
    <property type="method" value="X-ray"/>
    <property type="resolution" value="2.65 A"/>
    <property type="chains" value="M/a=21-266"/>
</dbReference>
<dbReference type="PDB" id="8OI1">
    <property type="method" value="X-ray"/>
    <property type="resolution" value="2.95 A"/>
    <property type="chains" value="M/a=21-266"/>
</dbReference>
<dbReference type="PDB" id="8OLR">
    <property type="method" value="X-ray"/>
    <property type="resolution" value="2.80 A"/>
    <property type="chains" value="M/a=21-266"/>
</dbReference>
<dbReference type="PDB" id="8RHJ">
    <property type="method" value="X-ray"/>
    <property type="resolution" value="3.05 A"/>
    <property type="chains" value="M/a=21-266"/>
</dbReference>
<dbReference type="PDB" id="8RHK">
    <property type="method" value="X-ray"/>
    <property type="resolution" value="2.80 A"/>
    <property type="chains" value="M/a=21-266"/>
</dbReference>
<dbReference type="PDB" id="8RHL">
    <property type="method" value="X-ray"/>
    <property type="resolution" value="3.20 A"/>
    <property type="chains" value="M/a=21-266"/>
</dbReference>
<dbReference type="PDB" id="8RVL">
    <property type="method" value="EM"/>
    <property type="resolution" value="2.14 A"/>
    <property type="chains" value="2/N=1-266"/>
</dbReference>
<dbReference type="PDB" id="8RVO">
    <property type="method" value="EM"/>
    <property type="resolution" value="2.69 A"/>
    <property type="chains" value="2/N=1-266"/>
</dbReference>
<dbReference type="PDB" id="8RVP">
    <property type="method" value="EM"/>
    <property type="resolution" value="2.28 A"/>
    <property type="chains" value="2/N=1-266"/>
</dbReference>
<dbReference type="PDB" id="8RVQ">
    <property type="method" value="EM"/>
    <property type="resolution" value="2.02 A"/>
    <property type="chains" value="2/N=34-266"/>
</dbReference>
<dbReference type="PDB" id="8T08">
    <property type="method" value="EM"/>
    <property type="resolution" value="3.00 A"/>
    <property type="chains" value="Q/h=1-251"/>
</dbReference>
<dbReference type="PDB" id="8T0M">
    <property type="method" value="EM"/>
    <property type="resolution" value="2.40 A"/>
    <property type="chains" value="N/b=1-251"/>
</dbReference>
<dbReference type="PDB" id="8U6Y">
    <property type="method" value="EM"/>
    <property type="resolution" value="2.80 A"/>
    <property type="chains" value="Q/h=1-266"/>
</dbReference>
<dbReference type="PDB" id="8U7U">
    <property type="method" value="EM"/>
    <property type="resolution" value="2.16 A"/>
    <property type="chains" value="2/N=1-266"/>
</dbReference>
<dbReference type="PDB" id="9EY9">
    <property type="method" value="X-ray"/>
    <property type="resolution" value="3.10 A"/>
    <property type="chains" value="M/a=21-266"/>
</dbReference>
<dbReference type="PDB" id="9FST">
    <property type="method" value="X-ray"/>
    <property type="resolution" value="2.75 A"/>
    <property type="chains" value="M/a=21-266"/>
</dbReference>
<dbReference type="PDB" id="9FSV">
    <property type="method" value="X-ray"/>
    <property type="resolution" value="2.75 A"/>
    <property type="chains" value="M/a=21-266"/>
</dbReference>
<dbReference type="PDB" id="9FT0">
    <property type="method" value="X-ray"/>
    <property type="resolution" value="2.75 A"/>
    <property type="chains" value="M/a=21-266"/>
</dbReference>
<dbReference type="PDB" id="9FT1">
    <property type="method" value="X-ray"/>
    <property type="resolution" value="2.60 A"/>
    <property type="chains" value="M/a=21-266"/>
</dbReference>
<dbReference type="PDB" id="9GBK">
    <property type="method" value="EM"/>
    <property type="resolution" value="2.39 A"/>
    <property type="chains" value="2/N=34-266"/>
</dbReference>
<dbReference type="PDBsum" id="1FNT"/>
<dbReference type="PDBsum" id="1G0U"/>
<dbReference type="PDBsum" id="1G65"/>
<dbReference type="PDBsum" id="1JD2"/>
<dbReference type="PDBsum" id="1RYP"/>
<dbReference type="PDBsum" id="1Z7Q"/>
<dbReference type="PDBsum" id="2F16"/>
<dbReference type="PDBsum" id="2FAK"/>
<dbReference type="PDBsum" id="2GPL"/>
<dbReference type="PDBsum" id="2ZCY"/>
<dbReference type="PDBsum" id="3BDM"/>
<dbReference type="PDBsum" id="3D29"/>
<dbReference type="PDBsum" id="3DY3"/>
<dbReference type="PDBsum" id="3DY4"/>
<dbReference type="PDBsum" id="3E47"/>
<dbReference type="PDBsum" id="3GPJ"/>
<dbReference type="PDBsum" id="3GPT"/>
<dbReference type="PDBsum" id="3GPW"/>
<dbReference type="PDBsum" id="3HYE"/>
<dbReference type="PDBsum" id="3JCO"/>
<dbReference type="PDBsum" id="3JCP"/>
<dbReference type="PDBsum" id="3MG0"/>
<dbReference type="PDBsum" id="3MG4"/>
<dbReference type="PDBsum" id="3MG6"/>
<dbReference type="PDBsum" id="3MG7"/>
<dbReference type="PDBsum" id="3MG8"/>
<dbReference type="PDBsum" id="3NZJ"/>
<dbReference type="PDBsum" id="3NZW"/>
<dbReference type="PDBsum" id="3NZX"/>
<dbReference type="PDBsum" id="3OEU"/>
<dbReference type="PDBsum" id="3OEV"/>
<dbReference type="PDBsum" id="3OKJ"/>
<dbReference type="PDBsum" id="3SDI"/>
<dbReference type="PDBsum" id="3SDK"/>
<dbReference type="PDBsum" id="3SHJ"/>
<dbReference type="PDBsum" id="3TDD"/>
<dbReference type="PDBsum" id="3UN4"/>
<dbReference type="PDBsum" id="3UN8"/>
<dbReference type="PDBsum" id="3WXR"/>
<dbReference type="PDBsum" id="4CR2"/>
<dbReference type="PDBsum" id="4CR3"/>
<dbReference type="PDBsum" id="4CR4"/>
<dbReference type="PDBsum" id="4EU2"/>
<dbReference type="PDBsum" id="4FZC"/>
<dbReference type="PDBsum" id="4FZG"/>
<dbReference type="PDBsum" id="4G4S"/>
<dbReference type="PDBsum" id="4GK7"/>
<dbReference type="PDBsum" id="4HNP"/>
<dbReference type="PDBsum" id="4HRC"/>
<dbReference type="PDBsum" id="4HRD"/>
<dbReference type="PDBsum" id="4INR"/>
<dbReference type="PDBsum" id="4INT"/>
<dbReference type="PDBsum" id="4INU"/>
<dbReference type="PDBsum" id="4J70"/>
<dbReference type="PDBsum" id="4JSQ"/>
<dbReference type="PDBsum" id="4JSU"/>
<dbReference type="PDBsum" id="4JT0"/>
<dbReference type="PDBsum" id="4LQI"/>
<dbReference type="PDBsum" id="4LTC"/>
<dbReference type="PDBsum" id="4NNN"/>
<dbReference type="PDBsum" id="4NNW"/>
<dbReference type="PDBsum" id="4NO1"/>
<dbReference type="PDBsum" id="4NO6"/>
<dbReference type="PDBsum" id="4NO8"/>
<dbReference type="PDBsum" id="4NO9"/>
<dbReference type="PDBsum" id="4Q1S"/>
<dbReference type="PDBsum" id="4QBY"/>
<dbReference type="PDBsum" id="4QLQ"/>
<dbReference type="PDBsum" id="4QLS"/>
<dbReference type="PDBsum" id="4QLT"/>
<dbReference type="PDBsum" id="4QLU"/>
<dbReference type="PDBsum" id="4QLV"/>
<dbReference type="PDBsum" id="4QUX"/>
<dbReference type="PDBsum" id="4QUY"/>
<dbReference type="PDBsum" id="4QV0"/>
<dbReference type="PDBsum" id="4QV1"/>
<dbReference type="PDBsum" id="4QV3"/>
<dbReference type="PDBsum" id="4QV4"/>
<dbReference type="PDBsum" id="4QV5"/>
<dbReference type="PDBsum" id="4QV6"/>
<dbReference type="PDBsum" id="4QV7"/>
<dbReference type="PDBsum" id="4QV8"/>
<dbReference type="PDBsum" id="4QV9"/>
<dbReference type="PDBsum" id="4QVL"/>
<dbReference type="PDBsum" id="4QVM"/>
<dbReference type="PDBsum" id="4QVN"/>
<dbReference type="PDBsum" id="4QVP"/>
<dbReference type="PDBsum" id="4QVQ"/>
<dbReference type="PDBsum" id="4QVV"/>
<dbReference type="PDBsum" id="4QVW"/>
<dbReference type="PDBsum" id="4QVY"/>
<dbReference type="PDBsum" id="4QW0"/>
<dbReference type="PDBsum" id="4QW1"/>
<dbReference type="PDBsum" id="4QW3"/>
<dbReference type="PDBsum" id="4QW4"/>
<dbReference type="PDBsum" id="4QW5"/>
<dbReference type="PDBsum" id="4QW6"/>
<dbReference type="PDBsum" id="4QW7"/>
<dbReference type="PDBsum" id="4QWF"/>
<dbReference type="PDBsum" id="4QWG"/>
<dbReference type="PDBsum" id="4QWI"/>
<dbReference type="PDBsum" id="4QWJ"/>
<dbReference type="PDBsum" id="4QWK"/>
<dbReference type="PDBsum" id="4QWL"/>
<dbReference type="PDBsum" id="4QWR"/>
<dbReference type="PDBsum" id="4QWS"/>
<dbReference type="PDBsum" id="4QWU"/>
<dbReference type="PDBsum" id="4QWX"/>
<dbReference type="PDBsum" id="4QXJ"/>
<dbReference type="PDBsum" id="4QZ0"/>
<dbReference type="PDBsum" id="4QZ1"/>
<dbReference type="PDBsum" id="4QZ2"/>
<dbReference type="PDBsum" id="4QZ3"/>
<dbReference type="PDBsum" id="4QZ4"/>
<dbReference type="PDBsum" id="4QZ5"/>
<dbReference type="PDBsum" id="4QZ6"/>
<dbReference type="PDBsum" id="4QZ7"/>
<dbReference type="PDBsum" id="4QZW"/>
<dbReference type="PDBsum" id="4QZX"/>
<dbReference type="PDBsum" id="4QZZ"/>
<dbReference type="PDBsum" id="4R00"/>
<dbReference type="PDBsum" id="4R02"/>
<dbReference type="PDBsum" id="4R17"/>
<dbReference type="PDBsum" id="4R18"/>
<dbReference type="PDBsum" id="4RUR"/>
<dbReference type="PDBsum" id="4V7O"/>
<dbReference type="PDBsum" id="4X6Z"/>
<dbReference type="PDBsum" id="4Y69"/>
<dbReference type="PDBsum" id="4Y6A"/>
<dbReference type="PDBsum" id="4Y6V"/>
<dbReference type="PDBsum" id="4Y6Z"/>
<dbReference type="PDBsum" id="4Y70"/>
<dbReference type="PDBsum" id="4Y74"/>
<dbReference type="PDBsum" id="4Y75"/>
<dbReference type="PDBsum" id="4Y77"/>
<dbReference type="PDBsum" id="4Y78"/>
<dbReference type="PDBsum" id="4Y7W"/>
<dbReference type="PDBsum" id="4Y7X"/>
<dbReference type="PDBsum" id="4Y7Y"/>
<dbReference type="PDBsum" id="4Y80"/>
<dbReference type="PDBsum" id="4Y81"/>
<dbReference type="PDBsum" id="4Y82"/>
<dbReference type="PDBsum" id="4Y84"/>
<dbReference type="PDBsum" id="4Y8G"/>
<dbReference type="PDBsum" id="4Y8H"/>
<dbReference type="PDBsum" id="4Y8I"/>
<dbReference type="PDBsum" id="4Y8J"/>
<dbReference type="PDBsum" id="4Y8K"/>
<dbReference type="PDBsum" id="4Y8L"/>
<dbReference type="PDBsum" id="4Y8M"/>
<dbReference type="PDBsum" id="4Y8N"/>
<dbReference type="PDBsum" id="4Y8O"/>
<dbReference type="PDBsum" id="4Y8P"/>
<dbReference type="PDBsum" id="4Y8Q"/>
<dbReference type="PDBsum" id="4Y8R"/>
<dbReference type="PDBsum" id="4Y8S"/>
<dbReference type="PDBsum" id="4Y8T"/>
<dbReference type="PDBsum" id="4Y8U"/>
<dbReference type="PDBsum" id="4Y9Y"/>
<dbReference type="PDBsum" id="4Y9Z"/>
<dbReference type="PDBsum" id="4YA0"/>
<dbReference type="PDBsum" id="4YA1"/>
<dbReference type="PDBsum" id="4YA2"/>
<dbReference type="PDBsum" id="4YA3"/>
<dbReference type="PDBsum" id="4YA4"/>
<dbReference type="PDBsum" id="4YA5"/>
<dbReference type="PDBsum" id="4YA7"/>
<dbReference type="PDBsum" id="4YA9"/>
<dbReference type="PDBsum" id="4Z1L"/>
<dbReference type="PDBsum" id="5A5B"/>
<dbReference type="PDBsum" id="5AHJ"/>
<dbReference type="PDBsum" id="5BOU"/>
<dbReference type="PDBsum" id="5BXL"/>
<dbReference type="PDBsum" id="5BXN"/>
<dbReference type="PDBsum" id="5CGF"/>
<dbReference type="PDBsum" id="5CGG"/>
<dbReference type="PDBsum" id="5CGH"/>
<dbReference type="PDBsum" id="5CGI"/>
<dbReference type="PDBsum" id="5CZ4"/>
<dbReference type="PDBsum" id="5CZ5"/>
<dbReference type="PDBsum" id="5CZ6"/>
<dbReference type="PDBsum" id="5CZ7"/>
<dbReference type="PDBsum" id="5CZ8"/>
<dbReference type="PDBsum" id="5CZ9"/>
<dbReference type="PDBsum" id="5CZA"/>
<dbReference type="PDBsum" id="5D0S"/>
<dbReference type="PDBsum" id="5D0T"/>
<dbReference type="PDBsum" id="5D0V"/>
<dbReference type="PDBsum" id="5D0W"/>
<dbReference type="PDBsum" id="5D0X"/>
<dbReference type="PDBsum" id="5D0Z"/>
<dbReference type="PDBsum" id="5DKI"/>
<dbReference type="PDBsum" id="5DKJ"/>
<dbReference type="PDBsum" id="5FG7"/>
<dbReference type="PDBsum" id="5FG9"/>
<dbReference type="PDBsum" id="5FGA"/>
<dbReference type="PDBsum" id="5FGD"/>
<dbReference type="PDBsum" id="5FGE"/>
<dbReference type="PDBsum" id="5FGF"/>
<dbReference type="PDBsum" id="5FGG"/>
<dbReference type="PDBsum" id="5FGH"/>
<dbReference type="PDBsum" id="5FGI"/>
<dbReference type="PDBsum" id="5FHS"/>
<dbReference type="PDBsum" id="5JHR"/>
<dbReference type="PDBsum" id="5JHS"/>
<dbReference type="PDBsum" id="5L52"/>
<dbReference type="PDBsum" id="5L54"/>
<dbReference type="PDBsum" id="5L55"/>
<dbReference type="PDBsum" id="5L5A"/>
<dbReference type="PDBsum" id="5L5B"/>
<dbReference type="PDBsum" id="5L5D"/>
<dbReference type="PDBsum" id="5L5E"/>
<dbReference type="PDBsum" id="5L5F"/>
<dbReference type="PDBsum" id="5L5H"/>
<dbReference type="PDBsum" id="5L5I"/>
<dbReference type="PDBsum" id="5L5J"/>
<dbReference type="PDBsum" id="5L5O"/>
<dbReference type="PDBsum" id="5L5P"/>
<dbReference type="PDBsum" id="5L5Q"/>
<dbReference type="PDBsum" id="5L5R"/>
<dbReference type="PDBsum" id="5L5S"/>
<dbReference type="PDBsum" id="5L5T"/>
<dbReference type="PDBsum" id="5L5U"/>
<dbReference type="PDBsum" id="5L5V"/>
<dbReference type="PDBsum" id="5L5W"/>
<dbReference type="PDBsum" id="5L5X"/>
<dbReference type="PDBsum" id="5L5Y"/>
<dbReference type="PDBsum" id="5L5Z"/>
<dbReference type="PDBsum" id="5L60"/>
<dbReference type="PDBsum" id="5L61"/>
<dbReference type="PDBsum" id="5L62"/>
<dbReference type="PDBsum" id="5L63"/>
<dbReference type="PDBsum" id="5L64"/>
<dbReference type="PDBsum" id="5L65"/>
<dbReference type="PDBsum" id="5L66"/>
<dbReference type="PDBsum" id="5L67"/>
<dbReference type="PDBsum" id="5L68"/>
<dbReference type="PDBsum" id="5L69"/>
<dbReference type="PDBsum" id="5L6A"/>
<dbReference type="PDBsum" id="5L6B"/>
<dbReference type="PDBsum" id="5L6C"/>
<dbReference type="PDBsum" id="5LAI"/>
<dbReference type="PDBsum" id="5LAJ"/>
<dbReference type="PDBsum" id="5LTT"/>
<dbReference type="PDBsum" id="5M2B"/>
<dbReference type="PDBsum" id="5MP9"/>
<dbReference type="PDBsum" id="5MPA"/>
<dbReference type="PDBsum" id="5MPB"/>
<dbReference type="PDBsum" id="5MPC"/>
<dbReference type="PDBsum" id="5NIF"/>
<dbReference type="PDBsum" id="5WVI"/>
<dbReference type="PDBsum" id="5WVK"/>
<dbReference type="PDBsum" id="6EF3"/>
<dbReference type="PDBsum" id="6FVT"/>
<dbReference type="PDBsum" id="6FVU"/>
<dbReference type="PDBsum" id="6FVV"/>
<dbReference type="PDBsum" id="6FVW"/>
<dbReference type="PDBsum" id="6FVX"/>
<dbReference type="PDBsum" id="6FVY"/>
<dbReference type="PDBsum" id="6G7F"/>
<dbReference type="PDBsum" id="6G8M"/>
<dbReference type="PDBsum" id="6G8N"/>
<dbReference type="PDBsum" id="6GOP"/>
<dbReference type="PDBsum" id="6H39"/>
<dbReference type="PDBsum" id="6HTB"/>
<dbReference type="PDBsum" id="6HTC"/>
<dbReference type="PDBsum" id="6HTD"/>
<dbReference type="PDBsum" id="6HTP"/>
<dbReference type="PDBsum" id="6HTR"/>
<dbReference type="PDBsum" id="6HUB"/>
<dbReference type="PDBsum" id="6HUC"/>
<dbReference type="PDBsum" id="6HUQ"/>
<dbReference type="PDBsum" id="6HUU"/>
<dbReference type="PDBsum" id="6HUV"/>
<dbReference type="PDBsum" id="6HV3"/>
<dbReference type="PDBsum" id="6HV4"/>
<dbReference type="PDBsum" id="6HV5"/>
<dbReference type="PDBsum" id="6HV7"/>
<dbReference type="PDBsum" id="6HVA"/>
<dbReference type="PDBsum" id="6HVR"/>
<dbReference type="PDBsum" id="6HVS"/>
<dbReference type="PDBsum" id="6HVT"/>
<dbReference type="PDBsum" id="6HVU"/>
<dbReference type="PDBsum" id="6HVV"/>
<dbReference type="PDBsum" id="6HVW"/>
<dbReference type="PDBsum" id="6HVX"/>
<dbReference type="PDBsum" id="6HVY"/>
<dbReference type="PDBsum" id="6HW0"/>
<dbReference type="PDBsum" id="6HW3"/>
<dbReference type="PDBsum" id="6HW4"/>
<dbReference type="PDBsum" id="6HW5"/>
<dbReference type="PDBsum" id="6HW6"/>
<dbReference type="PDBsum" id="6HW7"/>
<dbReference type="PDBsum" id="6HW8"/>
<dbReference type="PDBsum" id="6HW9"/>
<dbReference type="PDBsum" id="6HWA"/>
<dbReference type="PDBsum" id="6HWB"/>
<dbReference type="PDBsum" id="6HWC"/>
<dbReference type="PDBsum" id="6HWD"/>
<dbReference type="PDBsum" id="6HWE"/>
<dbReference type="PDBsum" id="6HWF"/>
<dbReference type="PDBsum" id="6J2C"/>
<dbReference type="PDBsum" id="6J2N"/>
<dbReference type="PDBsum" id="6J2Q"/>
<dbReference type="PDBsum" id="6J2X"/>
<dbReference type="PDBsum" id="6J30"/>
<dbReference type="PDBsum" id="6ZOU"/>
<dbReference type="PDBsum" id="6ZP6"/>
<dbReference type="PDBsum" id="6ZP8"/>
<dbReference type="PDBsum" id="7LS5"/>
<dbReference type="PDBsum" id="7O2L"/>
<dbReference type="PDBsum" id="7QO3"/>
<dbReference type="PDBsum" id="7QO5"/>
<dbReference type="PDBsum" id="7QO6"/>
<dbReference type="PDBsum" id="7TEJ"/>
<dbReference type="PDBsum" id="7TEO"/>
<dbReference type="PDBsum" id="8BW1"/>
<dbReference type="PDBsum" id="8OHZ"/>
<dbReference type="PDBsum" id="8OI1"/>
<dbReference type="PDBsum" id="8OLR"/>
<dbReference type="PDBsum" id="8RHJ"/>
<dbReference type="PDBsum" id="8RHK"/>
<dbReference type="PDBsum" id="8RHL"/>
<dbReference type="PDBsum" id="8RVL"/>
<dbReference type="PDBsum" id="8RVO"/>
<dbReference type="PDBsum" id="8RVP"/>
<dbReference type="PDBsum" id="8RVQ"/>
<dbReference type="PDBsum" id="8T08"/>
<dbReference type="PDBsum" id="8T0M"/>
<dbReference type="PDBsum" id="8U6Y"/>
<dbReference type="PDBsum" id="8U7U"/>
<dbReference type="PDBsum" id="9EY9"/>
<dbReference type="PDBsum" id="9FST"/>
<dbReference type="PDBsum" id="9FSV"/>
<dbReference type="PDBsum" id="9FT0"/>
<dbReference type="PDBsum" id="9FT1"/>
<dbReference type="PDBsum" id="9GBK"/>
<dbReference type="EMDB" id="EMD-14082"/>
<dbReference type="EMDB" id="EMD-14084"/>
<dbReference type="EMDB" id="EMD-14085"/>
<dbReference type="EMDB" id="EMD-19523"/>
<dbReference type="EMDB" id="EMD-19527"/>
<dbReference type="EMDB" id="EMD-19528"/>
<dbReference type="EMDB" id="EMD-19529"/>
<dbReference type="EMDB" id="EMD-23502"/>
<dbReference type="EMDB" id="EMD-25847"/>
<dbReference type="EMDB" id="EMD-25848"/>
<dbReference type="EMDB" id="EMD-3534"/>
<dbReference type="EMDB" id="EMD-3535"/>
<dbReference type="EMDB" id="EMD-3536"/>
<dbReference type="EMDB" id="EMD-3537"/>
<dbReference type="EMDB" id="EMD-40938"/>
<dbReference type="EMDB" id="EMD-40944"/>
<dbReference type="EMDB" id="EMD-41963"/>
<dbReference type="EMDB" id="EMD-41993"/>
<dbReference type="EMDB" id="EMD-4321"/>
<dbReference type="EMDB" id="EMD-4322"/>
<dbReference type="EMDB" id="EMD-4323"/>
<dbReference type="EMDB" id="EMD-4324"/>
<dbReference type="EMDB" id="EMD-51221"/>
<dbReference type="EMDB" id="EMD-6693"/>
<dbReference type="EMDB" id="EMD-6694"/>
<dbReference type="EMDB" id="EMD-9045"/>
<dbReference type="EMDB" id="EMD-9769"/>
<dbReference type="EMDB" id="EMD-9770"/>
<dbReference type="EMDB" id="EMD-9771"/>
<dbReference type="EMDB" id="EMD-9772"/>
<dbReference type="EMDB" id="EMD-9773"/>
<dbReference type="SMR" id="P30657"/>
<dbReference type="BioGRID" id="31208">
    <property type="interactions" value="439"/>
</dbReference>
<dbReference type="ComplexPortal" id="CPX-2262">
    <property type="entry name" value="26S proteasome complex"/>
</dbReference>
<dbReference type="DIP" id="DIP-2807N"/>
<dbReference type="FunCoup" id="P30657">
    <property type="interactions" value="1415"/>
</dbReference>
<dbReference type="IntAct" id="P30657">
    <property type="interactions" value="47"/>
</dbReference>
<dbReference type="MINT" id="P30657"/>
<dbReference type="STRING" id="4932.YFR050C"/>
<dbReference type="MEROPS" id="T01.A13"/>
<dbReference type="iPTMnet" id="P30657"/>
<dbReference type="PaxDb" id="4932-YFR050C"/>
<dbReference type="PeptideAtlas" id="P30657"/>
<dbReference type="EnsemblFungi" id="YFR050C_mRNA">
    <property type="protein sequence ID" value="YFR050C"/>
    <property type="gene ID" value="YFR050C"/>
</dbReference>
<dbReference type="GeneID" id="850611"/>
<dbReference type="KEGG" id="sce:YFR050C"/>
<dbReference type="AGR" id="SGD:S000001946"/>
<dbReference type="SGD" id="S000001946">
    <property type="gene designation" value="PRE4"/>
</dbReference>
<dbReference type="VEuPathDB" id="FungiDB:YFR050C"/>
<dbReference type="eggNOG" id="KOG0185">
    <property type="taxonomic scope" value="Eukaryota"/>
</dbReference>
<dbReference type="GeneTree" id="ENSGT00390000000698"/>
<dbReference type="HOGENOM" id="CLU_072435_0_1_1"/>
<dbReference type="InParanoid" id="P30657"/>
<dbReference type="OMA" id="QPIMRRY"/>
<dbReference type="OrthoDB" id="10248542at2759"/>
<dbReference type="BioCyc" id="YEAST:G3O-30496-MONOMER"/>
<dbReference type="Reactome" id="R-SCE-1236978">
    <property type="pathway name" value="Cross-presentation of soluble exogenous antigens (endosomes)"/>
</dbReference>
<dbReference type="Reactome" id="R-SCE-5668541">
    <property type="pathway name" value="TNFR2 non-canonical NF-kB pathway"/>
</dbReference>
<dbReference type="Reactome" id="R-SCE-5687128">
    <property type="pathway name" value="MAPK6/MAPK4 signaling"/>
</dbReference>
<dbReference type="Reactome" id="R-SCE-5689880">
    <property type="pathway name" value="Ub-specific processing proteases"/>
</dbReference>
<dbReference type="Reactome" id="R-SCE-68949">
    <property type="pathway name" value="Orc1 removal from chromatin"/>
</dbReference>
<dbReference type="Reactome" id="R-SCE-69017">
    <property type="pathway name" value="CDK-mediated phosphorylation and removal of Cdc6"/>
</dbReference>
<dbReference type="Reactome" id="R-SCE-69601">
    <property type="pathway name" value="Ubiquitin Mediated Degradation of Phosphorylated Cdc25A"/>
</dbReference>
<dbReference type="Reactome" id="R-SCE-8854050">
    <property type="pathway name" value="FBXL7 down-regulates AURKA during mitotic entry and in early mitosis"/>
</dbReference>
<dbReference type="Reactome" id="R-SCE-8948751">
    <property type="pathway name" value="Regulation of PTEN stability and activity"/>
</dbReference>
<dbReference type="Reactome" id="R-SCE-8951664">
    <property type="pathway name" value="Neddylation"/>
</dbReference>
<dbReference type="Reactome" id="R-SCE-9755511">
    <property type="pathway name" value="KEAP1-NFE2L2 pathway"/>
</dbReference>
<dbReference type="Reactome" id="R-SCE-983168">
    <property type="pathway name" value="Antigen processing: Ubiquitination &amp; Proteasome degradation"/>
</dbReference>
<dbReference type="Reactome" id="R-SCE-9907900">
    <property type="pathway name" value="Proteasome assembly"/>
</dbReference>
<dbReference type="BioGRID-ORCS" id="850611">
    <property type="hits" value="1 hit in 10 CRISPR screens"/>
</dbReference>
<dbReference type="CD-CODE" id="A777E0F8">
    <property type="entry name" value="P-body"/>
</dbReference>
<dbReference type="EvolutionaryTrace" id="P30657"/>
<dbReference type="PRO" id="PR:P30657"/>
<dbReference type="Proteomes" id="UP000002311">
    <property type="component" value="Chromosome VI"/>
</dbReference>
<dbReference type="RNAct" id="P30657">
    <property type="molecule type" value="protein"/>
</dbReference>
<dbReference type="GO" id="GO:0005829">
    <property type="term" value="C:cytosol"/>
    <property type="evidence" value="ECO:0000318"/>
    <property type="project" value="GO_Central"/>
</dbReference>
<dbReference type="GO" id="GO:0005634">
    <property type="term" value="C:nucleus"/>
    <property type="evidence" value="ECO:0007005"/>
    <property type="project" value="SGD"/>
</dbReference>
<dbReference type="GO" id="GO:0000502">
    <property type="term" value="C:proteasome complex"/>
    <property type="evidence" value="ECO:0000353"/>
    <property type="project" value="ComplexPortal"/>
</dbReference>
<dbReference type="GO" id="GO:0019774">
    <property type="term" value="C:proteasome core complex, beta-subunit complex"/>
    <property type="evidence" value="ECO:0000314"/>
    <property type="project" value="SGD"/>
</dbReference>
<dbReference type="GO" id="GO:0034515">
    <property type="term" value="C:proteasome storage granule"/>
    <property type="evidence" value="ECO:0000314"/>
    <property type="project" value="SGD"/>
</dbReference>
<dbReference type="GO" id="GO:0010499">
    <property type="term" value="P:proteasomal ubiquitin-independent protein catabolic process"/>
    <property type="evidence" value="ECO:0000314"/>
    <property type="project" value="SGD"/>
</dbReference>
<dbReference type="GO" id="GO:0043248">
    <property type="term" value="P:proteasome assembly"/>
    <property type="evidence" value="ECO:0000316"/>
    <property type="project" value="SGD"/>
</dbReference>
<dbReference type="GO" id="GO:0043161">
    <property type="term" value="P:proteasome-mediated ubiquitin-dependent protein catabolic process"/>
    <property type="evidence" value="ECO:0000314"/>
    <property type="project" value="SGD"/>
</dbReference>
<dbReference type="CDD" id="cd03760">
    <property type="entry name" value="proteasome_beta_type_4"/>
    <property type="match status" value="1"/>
</dbReference>
<dbReference type="FunFam" id="3.60.20.10:FF:000014">
    <property type="entry name" value="Proteasome subunit beta type-7"/>
    <property type="match status" value="1"/>
</dbReference>
<dbReference type="Gene3D" id="3.60.20.10">
    <property type="entry name" value="Glutamine Phosphoribosylpyrophosphate, subunit 1, domain 1"/>
    <property type="match status" value="1"/>
</dbReference>
<dbReference type="InterPro" id="IPR029055">
    <property type="entry name" value="Ntn_hydrolases_N"/>
</dbReference>
<dbReference type="InterPro" id="IPR016295">
    <property type="entry name" value="Proteasome_beta4"/>
</dbReference>
<dbReference type="InterPro" id="IPR016050">
    <property type="entry name" value="Proteasome_bsu_CS"/>
</dbReference>
<dbReference type="InterPro" id="IPR001353">
    <property type="entry name" value="Proteasome_sua/b"/>
</dbReference>
<dbReference type="InterPro" id="IPR023333">
    <property type="entry name" value="Proteasome_suB-type"/>
</dbReference>
<dbReference type="PANTHER" id="PTHR32194">
    <property type="entry name" value="METALLOPROTEASE TLDD"/>
    <property type="match status" value="1"/>
</dbReference>
<dbReference type="PANTHER" id="PTHR32194:SF6">
    <property type="entry name" value="PROTEASOME SUBUNIT BETA"/>
    <property type="match status" value="1"/>
</dbReference>
<dbReference type="Pfam" id="PF00227">
    <property type="entry name" value="Proteasome"/>
    <property type="match status" value="1"/>
</dbReference>
<dbReference type="PIRSF" id="PIRSF001213">
    <property type="entry name" value="Psome_endopept_beta"/>
    <property type="match status" value="1"/>
</dbReference>
<dbReference type="SUPFAM" id="SSF56235">
    <property type="entry name" value="N-terminal nucleophile aminohydrolases (Ntn hydrolases)"/>
    <property type="match status" value="1"/>
</dbReference>
<dbReference type="PROSITE" id="PS00854">
    <property type="entry name" value="PROTEASOME_BETA_1"/>
    <property type="match status" value="1"/>
</dbReference>
<dbReference type="PROSITE" id="PS51476">
    <property type="entry name" value="PROTEASOME_BETA_2"/>
    <property type="match status" value="1"/>
</dbReference>
<gene>
    <name type="primary">PRE4</name>
    <name type="ordered locus">YFR050C</name>
</gene>
<proteinExistence type="evidence at protein level"/>
<sequence length="266" mass="29443">MNHDPFSWGRPADSTYGAYNTQIANAGASPMVNTQQPIVTGTSVISMKYDNGVIIAADNLGSYGSLLRFNGVERLIPVGDNTVVGISGDISDMQHIERLLKDLVTENAYDNPLADAEEALEPSYIFEYLATVMYQRRSKMNPLWNAIIVAGVQSNGDQFLRYVNLLGVTYSSPTLATGFGAHMANPLLRKVVDRESDIPKTTVQVAEEAIVNAMRVLYYRDARSSRNFSLAIIDKNTGLTFKKNLQVENMKWDFAKDIKGYGTQKI</sequence>
<protein>
    <recommendedName>
        <fullName>Proteasome subunit beta type-7</fullName>
    </recommendedName>
    <alternativeName>
        <fullName>Macropain subunit PRE4</fullName>
    </alternativeName>
    <alternativeName>
        <fullName>Multicatalytic endopeptidase complex subunit PRE4</fullName>
    </alternativeName>
    <alternativeName>
        <fullName>Proteasome component PRE4</fullName>
    </alternativeName>
    <alternativeName>
        <fullName>Proteinase YSCE subunit PRE4</fullName>
    </alternativeName>
</protein>